<name>ANT3_HUMAN</name>
<accession>P01008</accession>
<accession>B2R6P0</accession>
<accession>P78439</accession>
<accession>P78447</accession>
<accession>Q13815</accession>
<accession>Q5TC78</accession>
<accession>Q7KZ43</accession>
<accession>Q7KZ97</accession>
<accession>Q9UC78</accession>
<feature type="signal peptide" evidence="55">
    <location>
        <begin position="1"/>
        <end position="32"/>
    </location>
</feature>
<feature type="chain" id="PRO_0000032489" description="Antithrombin-III">
    <location>
        <begin position="33"/>
        <end position="464"/>
    </location>
</feature>
<feature type="binding site">
    <location>
        <position position="81"/>
    </location>
    <ligand>
        <name>heparin</name>
        <dbReference type="ChEBI" id="CHEBI:28304"/>
    </ligand>
</feature>
<feature type="binding site">
    <location>
        <position position="161"/>
    </location>
    <ligand>
        <name>heparin</name>
        <dbReference type="ChEBI" id="CHEBI:28304"/>
    </ligand>
</feature>
<feature type="binding site">
    <location>
        <position position="177"/>
    </location>
    <ligand>
        <name>heparin</name>
        <dbReference type="ChEBI" id="CHEBI:28304"/>
    </ligand>
</feature>
<feature type="site" description="Reactive bond" evidence="38">
    <location>
        <begin position="425"/>
        <end position="426"/>
    </location>
</feature>
<feature type="modified residue" description="Phosphothreonine; by FAM20C" evidence="28">
    <location>
        <position position="63"/>
    </location>
</feature>
<feature type="modified residue" description="Phosphoserine; by FAM20C" evidence="28 60">
    <location>
        <position position="68"/>
    </location>
</feature>
<feature type="glycosylation site" description="N-linked (GlcNAc...) asparagine" evidence="8 17 20 55">
    <location>
        <position position="128"/>
    </location>
</feature>
<feature type="glycosylation site" description="N-linked (GlcNAc...) asparagine" evidence="55">
    <location>
        <position position="167"/>
    </location>
</feature>
<feature type="glycosylation site" description="N-linked (GlcNAc...) (complex) asparagine" evidence="8 9 17 20 22 55">
    <location>
        <position position="187"/>
    </location>
</feature>
<feature type="glycosylation site" description="N-linked (GlcNAc...) asparagine" evidence="16 17 55">
    <location>
        <position position="224"/>
    </location>
</feature>
<feature type="disulfide bond" evidence="55">
    <location>
        <begin position="40"/>
        <end position="160"/>
    </location>
</feature>
<feature type="disulfide bond" evidence="55">
    <location>
        <begin position="53"/>
        <end position="127"/>
    </location>
</feature>
<feature type="disulfide bond" evidence="55">
    <location>
        <begin position="279"/>
        <end position="462"/>
    </location>
</feature>
<feature type="sequence variant" id="VAR_027450" description="In AT3D; type-I." evidence="51">
    <original>Y</original>
    <variation>S</variation>
    <location>
        <position position="17"/>
    </location>
</feature>
<feature type="sequence variant" id="VAR_012748" description="In AT3D; type-I; does not undergo post-translational glycosylation; dbSNP:rs387906575." evidence="51 54">
    <original>L</original>
    <variation>P</variation>
    <location>
        <position position="23"/>
    </location>
</feature>
<feature type="sequence variant" id="VAR_007032" description="In Dublin; dbSNP:rs2227624." evidence="21 27 51 58">
    <original>V</original>
    <variation>E</variation>
    <location>
        <position position="30"/>
    </location>
</feature>
<feature type="sequence variant" id="VAR_027451" description="In AT3D; type-I." evidence="53">
    <original>C</original>
    <variation>R</variation>
    <location>
        <position position="32"/>
    </location>
</feature>
<feature type="sequence variant" id="VAR_007033" description="In AT3D; type-II; Rouen-3; lack of heparin-binding properties; dbSNP:rs121909558." evidence="51">
    <original>I</original>
    <variation>N</variation>
    <location>
        <position position="39"/>
    </location>
</feature>
<feature type="sequence variant" id="VAR_007034" description="Previously Whitechapel; dbSNP:rs892712171." evidence="51">
    <original>M</original>
    <variation>T</variation>
    <location>
        <position position="52"/>
    </location>
</feature>
<feature type="sequence variant" id="VAR_071199" description="In AT3D." evidence="27">
    <original>C</original>
    <variation>F</variation>
    <location>
        <position position="53"/>
    </location>
</feature>
<feature type="sequence variant" id="VAR_007035" description="In AT3D; type-II; Rouen-4; lack of heparin-binding properties; dbSNP:rs28929469." evidence="26 51">
    <original>R</original>
    <variation>C</variation>
    <location>
        <position position="56"/>
    </location>
</feature>
<feature type="sequence variant" id="VAR_007036" description="In AT3D; type-II; lacks heparin-binding ability; dbSNP:rs121909551." evidence="27 31 51 53">
    <original>P</original>
    <variation>L</variation>
    <location>
        <position position="73"/>
    </location>
</feature>
<feature type="sequence variant" id="VAR_007037" description="In AT3D; Tours/Alger/Amiens/Toyama/Paris-1/Paris-2/Padua-2/Barcelona-2/Kumamoto/Omura/Sasebo; lacks heparin-binding ability; dbSNP:rs121909547." evidence="37 51 53">
    <original>R</original>
    <variation>C</variation>
    <location>
        <position position="79"/>
    </location>
</feature>
<feature type="sequence variant" id="VAR_007038" description="In AT3D; type-II; Rouen-1/Padua-1/Bligny/Budapest-2; lack of heparin-binding properties; dbSNP:rs121909552." evidence="44 51">
    <original>R</original>
    <variation>H</variation>
    <location>
        <position position="79"/>
    </location>
</feature>
<feature type="sequence variant" id="VAR_007039" description="In AT3D; type-II; Rouen-2; lack of heparin-binding properties; dbSNP:rs121909547." evidence="51">
    <original>R</original>
    <variation>S</variation>
    <location>
        <position position="79"/>
    </location>
</feature>
<feature type="sequence variant" id="VAR_007040" description="In AT3D; type-I." evidence="51">
    <location>
        <position position="87"/>
    </location>
</feature>
<feature type="sequence variant" id="VAR_007041" description="In AT3D; type-I; dbSNP:rs147266200." evidence="51">
    <original>R</original>
    <variation>C</variation>
    <location>
        <position position="89"/>
    </location>
</feature>
<feature type="sequence variant" id="VAR_007042" description="In AT3D; type-I; Budapest-6." evidence="51">
    <original>F</original>
    <variation>L</variation>
    <location>
        <position position="90"/>
    </location>
</feature>
<feature type="sequence variant" id="VAR_027452" description="In AT3D; type-I; dbSNP:rs907768931." evidence="51">
    <original>Y</original>
    <variation>C</variation>
    <location>
        <position position="95"/>
    </location>
</feature>
<feature type="sequence variant" id="VAR_012316" description="In AT3D; type-I." evidence="46 51">
    <original>Y</original>
    <variation>S</variation>
    <location>
        <position position="95"/>
    </location>
</feature>
<feature type="sequence variant" id="VAR_027453" description="In AT3D; type-I." evidence="51">
    <original>L</original>
    <variation>P</variation>
    <location>
        <position position="98"/>
    </location>
</feature>
<feature type="sequence variant" id="VAR_090276" description="In AT3D; type-I." evidence="50">
    <location>
        <begin position="108"/>
        <end position="109"/>
    </location>
</feature>
<feature type="sequence variant" id="VAR_086227" description="In AT3D; severely decreased antithrombin activity." evidence="10">
    <original>P</original>
    <variation>S</variation>
    <location>
        <position position="112"/>
    </location>
</feature>
<feature type="sequence variant" id="VAR_007044" description="In AT3D; type-I." evidence="43 51">
    <original>P</original>
    <variation>T</variation>
    <location>
        <position position="112"/>
    </location>
</feature>
<feature type="sequence variant" id="VAR_027454" description="In AT3D; type-I." evidence="7">
    <original>M</original>
    <variation>K</variation>
    <location>
        <position position="121"/>
    </location>
</feature>
<feature type="sequence variant" id="VAR_071200" description="In AT3D." evidence="27">
    <original>G</original>
    <variation>D</variation>
    <location>
        <position position="125"/>
    </location>
</feature>
<feature type="sequence variant" id="VAR_027455" description="In AT3D; type-I; dbSNP:rs121909573." evidence="52">
    <original>C</original>
    <variation>R</variation>
    <location>
        <position position="127"/>
    </location>
</feature>
<feature type="sequence variant" id="VAR_007045" description="In AT3D; type-II; Budapest-3/Budapest-7; dbSNP:rs121909567." evidence="14 51">
    <original>L</original>
    <variation>F</variation>
    <location>
        <position position="131"/>
    </location>
</feature>
<feature type="sequence variant" id="VAR_007046" description="In AT3D; uncertain significance; type-II; Southport." evidence="51 57">
    <original>L</original>
    <variation>V</variation>
    <location>
        <position position="131"/>
    </location>
</feature>
<feature type="sequence variant" id="VAR_007047" description="In AT3D; type I; dbSNP:rs1411331203." evidence="51">
    <original>Q</original>
    <variation>K</variation>
    <location>
        <position position="133"/>
    </location>
</feature>
<feature type="sequence variant" id="VAR_007048" description="In AT3D; type-I." evidence="49">
    <location>
        <begin position="138"/>
        <end position="139"/>
    </location>
</feature>
<feature type="sequence variant" id="VAR_027456" description="In AT3D; Dreux; complete loss af heparin binding; dbSNP:rs1170430756." evidence="5">
    <original>K</original>
    <variation>E</variation>
    <location>
        <position position="146"/>
    </location>
</feature>
<feature type="sequence variant" id="VAR_013085" description="In AT3D; decreased antithrombin activity; dbSNP:rs2227606." evidence="35 58">
    <original>T</original>
    <variation>A</variation>
    <location>
        <position position="147"/>
    </location>
</feature>
<feature type="sequence variant" id="VAR_007049" description="In AT3D; type-II; Nagasaki; defective heparin binding associated with thrombosis; dbSNP:rs121909569." evidence="48 51">
    <original>S</original>
    <variation>P</variation>
    <location>
        <position position="148"/>
    </location>
</feature>
<feature type="sequence variant" id="VAR_007050" description="In AT3D; type-II; Vienna; dbSNP:rs765445413." evidence="51 57">
    <original>Q</original>
    <variation>P</variation>
    <location>
        <position position="150"/>
    </location>
</feature>
<feature type="sequence variant" id="VAR_012749" description="In AT3D; type-I." evidence="4">
    <location>
        <begin position="152"/>
        <end position="154"/>
    </location>
</feature>
<feature type="sequence variant" id="VAR_007051" description="In AT3D; type-I." evidence="43">
    <original>H</original>
    <variation>Y</variation>
    <location>
        <position position="152"/>
    </location>
</feature>
<feature type="sequence variant" id="VAR_007052" description="In AT3D; type-I.">
    <location>
        <position position="153"/>
    </location>
</feature>
<feature type="sequence variant" id="VAR_007053" description="In AT3D; type-I; dbSNP:rs2102786101." evidence="51">
    <original>L</original>
    <variation>P</variation>
    <location>
        <position position="158"/>
    </location>
</feature>
<feature type="sequence variant" id="VAR_027457" description="In AT3D; type-I." evidence="44 51">
    <original>C</original>
    <variation>Y</variation>
    <location>
        <position position="160"/>
    </location>
</feature>
<feature type="sequence variant" id="VAR_007054" description="In AT3D; type-II; Geneva; dbSNP:rs121909563." evidence="24 51">
    <original>R</original>
    <variation>Q</variation>
    <location>
        <position position="161"/>
    </location>
</feature>
<feature type="sequence variant" id="VAR_012750" description="In dbSNP:rs121909570." evidence="1">
    <original>N</original>
    <variation>T</variation>
    <location>
        <position position="167"/>
    </location>
</feature>
<feature type="sequence variant" id="VAR_071201" description="In AT3D; dbSNP:rs1657786518." evidence="27">
    <original>S</original>
    <variation>P</variation>
    <location>
        <position position="170"/>
    </location>
</feature>
<feature type="sequence variant" id="VAR_027458" description="In AT3D; type-I." evidence="7">
    <original>L</original>
    <variation>H</variation>
    <location>
        <position position="178"/>
    </location>
</feature>
<feature type="sequence variant" id="VAR_027459" description="In AT3D; type-I." evidence="11">
    <original>F</original>
    <variation>L</variation>
    <location>
        <position position="179"/>
    </location>
</feature>
<feature type="sequence variant" id="VAR_007055" description="In AT3D; uncertain significance." evidence="43 51">
    <original>Y</original>
    <variation>C</variation>
    <location>
        <position position="190"/>
    </location>
</feature>
<feature type="sequence variant" id="VAR_007056" description="In AT3D; type-I and -II; Whitechapel; dbSNP:rs1425532034." evidence="51">
    <original>Y</original>
    <variation>C</variation>
    <location>
        <position position="198"/>
    </location>
</feature>
<feature type="sequence variant" id="VAR_027460" description="In AT3D; uncertain significance; type-I; dbSNP:rs1572090114." evidence="51 53">
    <original>Y</original>
    <variation>H</variation>
    <location>
        <position position="198"/>
    </location>
</feature>
<feature type="sequence variant" id="VAR_027461" description="In AT3D; type-I." evidence="2">
    <original>S</original>
    <variation>F</variation>
    <location>
        <position position="214"/>
    </location>
</feature>
<feature type="sequence variant" id="VAR_007057" description="In AT3D; type-I; dbSNP:rs483352854." evidence="50">
    <original>S</original>
    <variation>Y</variation>
    <location>
        <position position="214"/>
    </location>
</feature>
<feature type="sequence variant" id="VAR_071202" description="In AT3D." evidence="27">
    <original>I</original>
    <variation>N</variation>
    <location>
        <position position="218"/>
    </location>
</feature>
<feature type="sequence variant" id="VAR_027462" description="In AT3D; type-I." evidence="51">
    <location>
        <position position="218"/>
    </location>
</feature>
<feature type="sequence variant" id="VAR_007059" description="In AT3D; type-II; Rouen-6; increases affinity for heparin; dbSNP:rs121909571." evidence="45 51">
    <original>N</original>
    <variation>D</variation>
    <location>
        <position position="219"/>
    </location>
</feature>
<feature type="sequence variant" id="VAR_007058" description="In AT3D; type-II; Glasgow-3." evidence="51">
    <original>N</original>
    <variation>K</variation>
    <location>
        <position position="219"/>
    </location>
</feature>
<feature type="sequence variant" id="VAR_027463" description="In AT3D; type-I; dbSNP:rs121909572." evidence="2 3">
    <original>S</original>
    <variation>P</variation>
    <location>
        <position position="223"/>
    </location>
</feature>
<feature type="sequence variant" id="VAR_086197" description="In AT3D; severely decreased antithrombin activity; low affinity for heparin." evidence="25">
    <original>EL</original>
    <variation>VLVLVNTRTS</variation>
    <location>
        <begin position="241"/>
        <end position="242"/>
    </location>
</feature>
<feature type="sequence variant" id="VAR_027464" description="In AT3D; type-I." evidence="2">
    <original>T</original>
    <variation>I</variation>
    <location>
        <position position="243"/>
    </location>
</feature>
<feature type="sequence variant" id="VAR_071203" description="In AT3D." evidence="27">
    <original>V</original>
    <variation>G</variation>
    <location>
        <position position="248"/>
    </location>
</feature>
<feature type="sequence variant" id="VAR_027465" description="In AT3D; type-I; dbSNP:rs1423630663." evidence="2">
    <original>I</original>
    <variation>T</variation>
    <location>
        <position position="251"/>
    </location>
</feature>
<feature type="sequence variant" id="VAR_027466" description="In AT3D; type-I." evidence="51 53">
    <original>W</original>
    <variation>R</variation>
    <location>
        <position position="257"/>
    </location>
</feature>
<feature type="sequence variant" id="VAR_027467" description="In AT3D." evidence="6">
    <original>F</original>
    <variation>L</variation>
    <location>
        <position position="261"/>
    </location>
</feature>
<feature type="sequence variant" id="VAR_007060" description="In AT3D; type-II; Truro; increases affinity for heparin; dbSNP:rs758087836." evidence="51">
    <original>E</original>
    <variation>K</variation>
    <location>
        <position position="269"/>
    </location>
</feature>
<feature type="sequence variant" id="VAR_007061" description="In AT3D; type-I." evidence="41">
    <location>
        <begin position="273"/>
        <end position="307"/>
    </location>
</feature>
<feature type="sequence variant" id="VAR_007062" description="In AT3D; type-II; dbSNP:rs2102783093." evidence="43 51">
    <original>M</original>
    <variation>I</variation>
    <location>
        <position position="283"/>
    </location>
</feature>
<feature type="sequence variant" id="VAR_027468" description="In AT3D; type-II." evidence="2">
    <original>M</original>
    <variation>V</variation>
    <location>
        <position position="283"/>
    </location>
</feature>
<feature type="sequence variant" id="VAR_071204" description="In AT3D." evidence="27">
    <original>R</original>
    <variation>P</variation>
    <location>
        <position position="293"/>
    </location>
</feature>
<feature type="sequence variant" id="VAR_007063" description="In AT3D; type-I." evidence="42">
    <original>L</original>
    <variation>P</variation>
    <location>
        <position position="302"/>
    </location>
</feature>
<feature type="sequence variant" id="VAR_007064" description="In AT3D; type-II; Haslar/Whitechapel." evidence="51">
    <original>I</original>
    <variation>N</variation>
    <location>
        <position position="316"/>
    </location>
</feature>
<feature type="sequence variant" id="VAR_027469" description="In AT3D.">
    <original>S</original>
    <variation>P</variation>
    <location>
        <position position="323"/>
    </location>
</feature>
<feature type="sequence variant" id="VAR_007065" description="In AT3D; type-II." evidence="51">
    <original>E</original>
    <variation>K</variation>
    <location>
        <position position="334"/>
    </location>
</feature>
<feature type="sequence variant" id="VAR_007066" description="In AT3D; type-I.">
    <location>
        <position position="344"/>
    </location>
</feature>
<feature type="sequence variant" id="VAR_007067" description="In AT3D; type-I; dbSNP:rs121909565." evidence="13">
    <original>S</original>
    <variation>P</variation>
    <location>
        <position position="381"/>
    </location>
</feature>
<feature type="sequence variant" id="VAR_086198" description="In AT3D." evidence="30">
    <original>P</original>
    <variation>PVFLP</variation>
    <location>
        <position position="384"/>
    </location>
</feature>
<feature type="sequence variant" id="VAR_007068" description="In dbSNP:rs201541724.">
    <original>R</original>
    <variation>Q</variation>
    <location>
        <position position="391"/>
    </location>
</feature>
<feature type="sequence variant" id="VAR_027470" description="In AT3D; type-I." evidence="2">
    <original>S</original>
    <variation>P</variation>
    <location>
        <position position="397"/>
    </location>
</feature>
<feature type="sequence variant" id="VAR_027471" description="In AT3D; type-I." evidence="18">
    <original>D</original>
    <variation>H</variation>
    <location>
        <position position="398"/>
    </location>
</feature>
<feature type="sequence variant" id="VAR_071205" description="In AT3D." evidence="27">
    <original>H</original>
    <variation>R</variation>
    <location>
        <position position="401"/>
    </location>
</feature>
<feature type="sequence variant" id="VAR_027472" description="In AT3D; type-I." evidence="51 53">
    <original>S</original>
    <variation>R</variation>
    <location>
        <position position="412"/>
    </location>
</feature>
<feature type="sequence variant" id="VAR_007069" description="In AT3D; type-II; Hamilton/Glasgow-2; reduces interaction with thrombin by 90%; dbSNP:rs121909557." evidence="23 33 39 51">
    <original>A</original>
    <variation>T</variation>
    <location>
        <position position="414"/>
    </location>
</feature>
<feature type="sequence variant" id="VAR_007070" description="In AT3D; type-II; Charleville/Sudbury/Vicenza/Cambridge-1; dbSNP:rs121909548." evidence="51">
    <original>A</original>
    <variation>P</variation>
    <location>
        <position position="416"/>
    </location>
</feature>
<feature type="sequence variant" id="VAR_007071" description="In AT3D; type-II; Cambridge-2; dbSNP:rs121909548." evidence="19 51">
    <original>A</original>
    <variation>S</variation>
    <location>
        <position position="416"/>
    </location>
</feature>
<feature type="sequence variant" id="VAR_007072" description="In AT3D; type-I; dbSNP:rs121909568." evidence="51">
    <original>A</original>
    <variation>V</variation>
    <location>
        <position position="419"/>
    </location>
</feature>
<feature type="sequence variant" id="VAR_007073" description="In AT3D; type-II; Stockholm; dbSNP:rs121909566." evidence="12 51">
    <original>G</original>
    <variation>D</variation>
    <location>
        <position position="424"/>
    </location>
</feature>
<feature type="sequence variant" id="VAR_007075" description="In AT3D; type-II; dbSNP:rs121909554." evidence="7 11 27 32 51">
    <original>R</original>
    <variation>C</variation>
    <location>
        <position position="425"/>
    </location>
</feature>
<feature type="sequence variant" id="VAR_007074" description="In AT3D; type-II; Glasgow/Sheffield/Chicago/Avranches/Kumamoto-2; increases affinity for heparin; deprived of inhibitory activity; dbSNP:rs121909549." evidence="7 29 32 40 51">
    <original>R</original>
    <variation>H</variation>
    <location>
        <position position="425"/>
    </location>
</feature>
<feature type="sequence variant" id="VAR_007076" description="In AT3D; type-II; Pescara; deprived of inhibitory of activity; dbSNP:rs121909549." evidence="51">
    <original>R</original>
    <variation>P</variation>
    <location>
        <position position="425"/>
    </location>
</feature>
<feature type="sequence variant" id="VAR_007077" description="In AT3D; type-II; Denver/Milano-2; deprived of inhibitory activity; dbSNP:rs121909550." evidence="11 36 51">
    <original>S</original>
    <variation>L</variation>
    <location>
        <position position="426"/>
    </location>
</feature>
<feature type="sequence variant" id="VAR_007078" description="In AT3D; uncertain significance; type-II; Rosny; dbSNP:rs1572084546." evidence="51">
    <original>F</original>
    <variation>C</variation>
    <location>
        <position position="434"/>
    </location>
</feature>
<feature type="sequence variant" id="VAR_007080" description="In AT3D; type-II; Maisons-Laffite." evidence="51">
    <original>F</original>
    <variation>L</variation>
    <location>
        <position position="434"/>
    </location>
</feature>
<feature type="sequence variant" id="VAR_007079" description="In AT3D; type-II; Torino." evidence="51">
    <original>F</original>
    <variation>S</variation>
    <location>
        <position position="434"/>
    </location>
</feature>
<feature type="sequence variant" id="VAR_007081" description="In AT3D; type-II; Oslo/Paris-3; dbSNP:rs121909546." evidence="51">
    <original>A</original>
    <variation>T</variation>
    <location>
        <position position="436"/>
    </location>
</feature>
<feature type="sequence variant" id="VAR_007082" description="In AT3D; type-II; La Rochelle; dbSNP:rs1301351856." evidence="51">
    <original>N</original>
    <variation>K</variation>
    <location>
        <position position="437"/>
    </location>
</feature>
<feature type="sequence variant" id="VAR_009258" description="In AT3D; uncertain significance; type I and type-II." evidence="27 51">
    <original>R</original>
    <variation>G</variation>
    <location>
        <position position="438"/>
    </location>
</feature>
<feature type="sequence variant" id="VAR_007083" description="In AT3D; uncertain significance; type-II; Kyoto." evidence="51 56">
    <original>R</original>
    <variation>M</variation>
    <location>
        <position position="438"/>
    </location>
</feature>
<feature type="sequence variant" id="VAR_071206" description="In AT3D; dbSNP:rs1487411568." evidence="27">
    <original>P</original>
    <variation>A</variation>
    <location>
        <position position="439"/>
    </location>
</feature>
<feature type="sequence variant" id="VAR_007084" description="In AT3D; type-II; Utah; deprived of inhibitory activity; dbSNP:rs121909555." evidence="34 51">
    <original>P</original>
    <variation>L</variation>
    <location>
        <position position="439"/>
    </location>
</feature>
<feature type="sequence variant" id="VAR_007085" description="In AT3D; type-II; Budapest-5; dbSNP:rs1487411568." evidence="51">
    <original>P</original>
    <variation>T</variation>
    <location>
        <position position="439"/>
    </location>
</feature>
<feature type="sequence variant" id="VAR_027473" description="In AT3D; type-II; dbSNP:rs1188571702." evidence="7">
    <original>L</original>
    <variation>P</variation>
    <location>
        <position position="441"/>
    </location>
</feature>
<feature type="sequence variant" id="VAR_007086" description="In AT3D; type-I." evidence="46 51">
    <original>I</original>
    <variation>T</variation>
    <location>
        <position position="453"/>
    </location>
</feature>
<feature type="sequence variant" id="VAR_007087" description="In AT3D; type-I; severely decreased antithrombin activity." evidence="10 47 51">
    <original>G</original>
    <variation>R</variation>
    <location>
        <position position="456"/>
    </location>
</feature>
<feature type="sequence variant" id="VAR_007088" description="In AT3D; type-II." evidence="51">
    <original>R</original>
    <variation>T</variation>
    <location>
        <position position="457"/>
    </location>
</feature>
<feature type="sequence variant" id="VAR_007089" description="In AT3D; type-I." evidence="50">
    <location>
        <begin position="459"/>
        <end position="461"/>
    </location>
</feature>
<feature type="sequence variant" id="VAR_007090" description="In AT3D; type-I; dbSNP:rs1572084448." evidence="51">
    <original>A</original>
    <variation>D</variation>
    <location>
        <position position="459"/>
    </location>
</feature>
<feature type="sequence variant" id="VAR_007091" description="In AT3D; type-II; Budapest; dbSNP:rs121909564." evidence="51">
    <original>P</original>
    <variation>L</variation>
    <location>
        <position position="461"/>
    </location>
</feature>
<feature type="sequence variant" id="VAR_007092" description="In AT3D; type-I." evidence="46 51">
    <original>C</original>
    <variation>F</variation>
    <location>
        <position position="462"/>
    </location>
</feature>
<feature type="mutagenesis site" description="Reduces interaction with thrombin by 99%." evidence="23">
    <original>A</original>
    <variation>K</variation>
    <location>
        <position position="414"/>
    </location>
</feature>
<feature type="mutagenesis site" description="Reduces interaction with thrombin by 80%." evidence="23">
    <original>A</original>
    <variation>Q</variation>
    <location>
        <position position="414"/>
    </location>
</feature>
<feature type="sequence conflict" description="In Ref. 10; AA sequence." evidence="59" ref="10">
    <original>EQ</original>
    <variation>QE</variation>
    <location>
        <begin position="69"/>
        <end position="70"/>
    </location>
</feature>
<feature type="sequence conflict" description="In Ref. 3; BAA06212." evidence="59" ref="3">
    <original>N</original>
    <variation>NN</variation>
    <location>
        <position position="77"/>
    </location>
</feature>
<feature type="sequence conflict" description="In Ref. 5; AAG35525." evidence="59" ref="5">
    <original>H</original>
    <variation>R</variation>
    <location>
        <position position="97"/>
    </location>
</feature>
<feature type="sequence conflict" description="In Ref. 6; BAG35537." evidence="59" ref="6">
    <original>A</original>
    <variation>T</variation>
    <location>
        <position position="120"/>
    </location>
</feature>
<feature type="sequence conflict" description="In Ref. 6; BAG35537." evidence="59" ref="6">
    <original>T</original>
    <variation>A</variation>
    <location>
        <position position="226"/>
    </location>
</feature>
<feature type="sequence conflict" description="In Ref. 10; AA sequence." evidence="59" ref="10">
    <location>
        <begin position="247"/>
        <end position="249"/>
    </location>
</feature>
<feature type="sequence conflict" description="In Ref. 13; AA sequence." evidence="59" ref="13">
    <location>
        <position position="388"/>
    </location>
</feature>
<feature type="sequence conflict" description="In Ref. 13; AA sequence." evidence="59" ref="13">
    <original>Y</original>
    <variation>YA</variation>
    <location>
        <position position="395"/>
    </location>
</feature>
<feature type="helix" evidence="66">
    <location>
        <begin position="39"/>
        <end position="41"/>
    </location>
</feature>
<feature type="turn" evidence="66">
    <location>
        <begin position="44"/>
        <end position="46"/>
    </location>
</feature>
<feature type="strand" evidence="63">
    <location>
        <begin position="51"/>
        <end position="53"/>
    </location>
</feature>
<feature type="helix" evidence="66">
    <location>
        <begin position="78"/>
        <end position="101"/>
    </location>
</feature>
<feature type="strand" evidence="61">
    <location>
        <begin position="104"/>
        <end position="106"/>
    </location>
</feature>
<feature type="strand" evidence="66">
    <location>
        <begin position="108"/>
        <end position="110"/>
    </location>
</feature>
<feature type="helix" evidence="66">
    <location>
        <begin position="112"/>
        <end position="123"/>
    </location>
</feature>
<feature type="helix" evidence="66">
    <location>
        <begin position="128"/>
        <end position="137"/>
    </location>
</feature>
<feature type="helix" evidence="65">
    <location>
        <begin position="140"/>
        <end position="142"/>
    </location>
</feature>
<feature type="helix" evidence="66">
    <location>
        <begin position="145"/>
        <end position="149"/>
    </location>
</feature>
<feature type="helix" evidence="66">
    <location>
        <begin position="151"/>
        <end position="166"/>
    </location>
</feature>
<feature type="turn" evidence="66">
    <location>
        <begin position="167"/>
        <end position="169"/>
    </location>
</feature>
<feature type="strand" evidence="66">
    <location>
        <begin position="170"/>
        <end position="181"/>
    </location>
</feature>
<feature type="strand" evidence="62">
    <location>
        <begin position="184"/>
        <end position="186"/>
    </location>
</feature>
<feature type="helix" evidence="66">
    <location>
        <begin position="188"/>
        <end position="198"/>
    </location>
</feature>
<feature type="strand" evidence="66">
    <location>
        <begin position="203"/>
        <end position="205"/>
    </location>
</feature>
<feature type="helix" evidence="66">
    <location>
        <begin position="207"/>
        <end position="225"/>
    </location>
</feature>
<feature type="turn" evidence="66">
    <location>
        <begin position="226"/>
        <end position="228"/>
    </location>
</feature>
<feature type="strand" evidence="64">
    <location>
        <begin position="236"/>
        <end position="239"/>
    </location>
</feature>
<feature type="strand" evidence="61">
    <location>
        <begin position="240"/>
        <end position="242"/>
    </location>
</feature>
<feature type="strand" evidence="66">
    <location>
        <begin position="245"/>
        <end position="255"/>
    </location>
</feature>
<feature type="strand" evidence="66">
    <location>
        <begin position="257"/>
        <end position="259"/>
    </location>
</feature>
<feature type="helix" evidence="66">
    <location>
        <begin position="263"/>
        <end position="265"/>
    </location>
</feature>
<feature type="strand" evidence="66">
    <location>
        <begin position="267"/>
        <end position="272"/>
    </location>
</feature>
<feature type="strand" evidence="65">
    <location>
        <begin position="274"/>
        <end position="276"/>
    </location>
</feature>
<feature type="strand" evidence="66">
    <location>
        <begin position="278"/>
        <end position="294"/>
    </location>
</feature>
<feature type="helix" evidence="66">
    <location>
        <begin position="296"/>
        <end position="298"/>
    </location>
</feature>
<feature type="strand" evidence="66">
    <location>
        <begin position="300"/>
        <end position="306"/>
    </location>
</feature>
<feature type="strand" evidence="66">
    <location>
        <begin position="309"/>
        <end position="317"/>
    </location>
</feature>
<feature type="strand" evidence="65">
    <location>
        <begin position="320"/>
        <end position="322"/>
    </location>
</feature>
<feature type="helix" evidence="66">
    <location>
        <begin position="324"/>
        <end position="329"/>
    </location>
</feature>
<feature type="helix" evidence="66">
    <location>
        <begin position="333"/>
        <end position="342"/>
    </location>
</feature>
<feature type="strand" evidence="66">
    <location>
        <begin position="344"/>
        <end position="353"/>
    </location>
</feature>
<feature type="strand" evidence="66">
    <location>
        <begin position="355"/>
        <end position="362"/>
    </location>
</feature>
<feature type="helix" evidence="66">
    <location>
        <begin position="364"/>
        <end position="369"/>
    </location>
</feature>
<feature type="helix" evidence="66">
    <location>
        <begin position="374"/>
        <end position="376"/>
    </location>
</feature>
<feature type="turn" evidence="66">
    <location>
        <begin position="378"/>
        <end position="380"/>
    </location>
</feature>
<feature type="turn" evidence="66">
    <location>
        <begin position="384"/>
        <end position="386"/>
    </location>
</feature>
<feature type="strand" evidence="66">
    <location>
        <begin position="389"/>
        <end position="392"/>
    </location>
</feature>
<feature type="strand" evidence="66">
    <location>
        <begin position="398"/>
        <end position="407"/>
    </location>
</feature>
<feature type="strand" evidence="65">
    <location>
        <begin position="409"/>
        <end position="413"/>
    </location>
</feature>
<feature type="strand" evidence="62">
    <location>
        <begin position="419"/>
        <end position="422"/>
    </location>
</feature>
<feature type="strand" evidence="66">
    <location>
        <begin position="423"/>
        <end position="426"/>
    </location>
</feature>
<feature type="strand" evidence="66">
    <location>
        <begin position="432"/>
        <end position="435"/>
    </location>
</feature>
<feature type="strand" evidence="66">
    <location>
        <begin position="440"/>
        <end position="446"/>
    </location>
</feature>
<feature type="turn" evidence="66">
    <location>
        <begin position="447"/>
        <end position="450"/>
    </location>
</feature>
<feature type="strand" evidence="66">
    <location>
        <begin position="451"/>
        <end position="459"/>
    </location>
</feature>
<keyword id="KW-0002">3D-structure</keyword>
<keyword id="KW-0094">Blood coagulation</keyword>
<keyword id="KW-0903">Direct protein sequencing</keyword>
<keyword id="KW-0225">Disease variant</keyword>
<keyword id="KW-1015">Disulfide bond</keyword>
<keyword id="KW-0325">Glycoprotein</keyword>
<keyword id="KW-0356">Hemostasis</keyword>
<keyword id="KW-0358">Heparin-binding</keyword>
<keyword id="KW-0597">Phosphoprotein</keyword>
<keyword id="KW-0646">Protease inhibitor</keyword>
<keyword id="KW-1267">Proteomics identification</keyword>
<keyword id="KW-1185">Reference proteome</keyword>
<keyword id="KW-0964">Secreted</keyword>
<keyword id="KW-0722">Serine protease inhibitor</keyword>
<keyword id="KW-0732">Signal</keyword>
<keyword id="KW-0792">Thrombophilia</keyword>
<protein>
    <recommendedName>
        <fullName>Antithrombin-III</fullName>
        <shortName>ATIII</shortName>
    </recommendedName>
    <alternativeName>
        <fullName>Serpin C1</fullName>
    </alternativeName>
</protein>
<gene>
    <name type="primary">SERPINC1</name>
    <name type="synonym">AT3</name>
    <name type="ORF">PRO0309</name>
</gene>
<comment type="function">
    <text evidence="10 15">Most important serine protease inhibitor in plasma that regulates the blood coagulation cascade (PubMed:15140129, PubMed:15853774). AT-III inhibits thrombin, matriptase-3/TMPRSS7, as well as factors IXa, Xa and XIa (PubMed:15140129). Its inhibitory activity is greatly enhanced in the presence of heparin.</text>
</comment>
<comment type="subunit">
    <text>Forms protease inhibiting heterodimer with TMPRSS7.</text>
</comment>
<comment type="interaction">
    <interactant intactId="EBI-1039832">
        <id>P01008</id>
    </interactant>
    <interactant intactId="EBI-7147442">
        <id>Q8IXL6</id>
        <label>FAM20C</label>
    </interactant>
    <organismsDiffer>false</organismsDiffer>
    <experiments>2</experiments>
</comment>
<comment type="interaction">
    <interactant intactId="EBI-1039832">
        <id>P01008</id>
    </interactant>
    <interactant intactId="EBI-1039832">
        <id>P01008</id>
        <label>SERPINC1</label>
    </interactant>
    <organismsDiffer>false</organismsDiffer>
    <experiments>2</experiments>
</comment>
<comment type="interaction">
    <interactant intactId="EBI-26959093">
        <id>PRO_0000032489</id>
    </interactant>
    <interactant intactId="EBI-26959170">
        <id>PRO_0000028160</id>
        <label>F2</label>
        <dbReference type="UniProtKB" id="P00734"/>
    </interactant>
    <organismsDiffer>false</organismsDiffer>
    <experiments>2</experiments>
</comment>
<comment type="interaction">
    <interactant intactId="EBI-26959093">
        <id>PRO_0000032489</id>
    </interactant>
    <interactant intactId="EBI-26959093">
        <id>PRO_0000032489</id>
        <label>SERPINC1</label>
        <dbReference type="UniProtKB" id="P01008"/>
    </interactant>
    <organismsDiffer>false</organismsDiffer>
    <experiments>2</experiments>
</comment>
<comment type="subcellular location">
    <subcellularLocation>
        <location>Secreted</location>
        <location>Extracellular space</location>
    </subcellularLocation>
</comment>
<comment type="tissue specificity">
    <text>Found in plasma.</text>
</comment>
<comment type="PTM">
    <text evidence="28">Phosphorylated by FAM20C in the extracellular medium.</text>
</comment>
<comment type="mass spectrometry"/>
<comment type="mass spectrometry">
    <text>Variant Thr-414.</text>
</comment>
<comment type="disease" evidence="2 3 4 5 6 7 10 11 12 13 14 18 19 23 24 25 26 27 29 30 31 32 33 34 35 36 37 39 40 41 42 43 44 45 46 47 48 49 50 51 52 53 54 56 57">
    <disease id="DI-00124">
        <name>Antithrombin III deficiency</name>
        <acronym>AT3D</acronym>
        <description>An important risk factor for hereditary thrombophilia, a hemostatic disorder characterized by a tendency to recurrent thrombosis. Antithrombin-III deficiency is classified into 4 types. Type I: characterized by a 50% decrease in antigenic and functional levels. Type II: has defects affecting the thrombin-binding domain. Type III: alteration of the heparin-binding domain. Plasma AT-III antigen levels are normal in type II and III. Type IV: consists of miscellaneous group of unclassifiable mutations.</description>
        <dbReference type="MIM" id="613118"/>
    </disease>
    <text>The disease is caused by variants affecting the gene represented in this entry.</text>
</comment>
<comment type="similarity">
    <text evidence="59">Belongs to the serpin family.</text>
</comment>
<comment type="online information" name="Wikipedia">
    <link uri="https://en.wikipedia.org/wiki/Antithrombin"/>
    <text>Antithrombin entry</text>
</comment>
<comment type="online information" name="Antithrombin mutation database">
    <link uri="https://www1.imperial.ac.uk/departmentofmedicine/divisions/experimentalmedicine/haematology/coag/antithrombin/"/>
</comment>
<sequence>MYSNVIGTVTSGKRKVYLLSLLLIGFWDCVTCHGSPVDICTAKPRDIPMNPMCIYRSPEKKATEDEGSEQKIPEATNRRVWELSKANSRFATTFYQHLADSKNDNDNIFLSPLSISTAFAMTKLGACNDTLQQLMEVFKFDTISEKTSDQIHFFFAKLNCRLYRKANKSSKLVSANRLFGDKSLTFNETYQDISELVYGAKLQPLDFKENAEQSRAAINKWVSNKTEGRITDVIPSEAINELTVLVLVNTIYFKGLWKSKFSPENTRKELFYKADGESCSASMMYQEGKFRYRRVAEGTQVLELPFKGDDITMVLILPKPEKSLAKVEKELTPEVLQEWLDELEEMMLVVHMPRFRIEDGFSLKEQLQDMGLVDLFSPEKSKLPGIVAEGRDDLYVSDAFHKAFLEVNEEGSEAAASTAVVIAGRSLNPNRVTFKANRPFLVFIREVPLNTIIFMGRVANPCVK</sequence>
<proteinExistence type="evidence at protein level"/>
<dbReference type="EMBL" id="L00185">
    <property type="status" value="NOT_ANNOTATED_CDS"/>
    <property type="molecule type" value="Genomic_DNA"/>
</dbReference>
<dbReference type="EMBL" id="L00186">
    <property type="status" value="NOT_ANNOTATED_CDS"/>
    <property type="molecule type" value="Genomic_DNA"/>
</dbReference>
<dbReference type="EMBL" id="L00190">
    <property type="protein sequence ID" value="AAB40025.1"/>
    <property type="molecule type" value="Genomic_DNA"/>
</dbReference>
<dbReference type="EMBL" id="D29832">
    <property type="protein sequence ID" value="BAA06212.1"/>
    <property type="molecule type" value="mRNA"/>
</dbReference>
<dbReference type="EMBL" id="X68793">
    <property type="protein sequence ID" value="CAA48690.1"/>
    <property type="molecule type" value="Genomic_DNA"/>
</dbReference>
<dbReference type="EMBL" id="AF130100">
    <property type="protein sequence ID" value="AAG35525.1"/>
    <property type="molecule type" value="mRNA"/>
</dbReference>
<dbReference type="EMBL" id="AK312654">
    <property type="protein sequence ID" value="BAG35537.1"/>
    <property type="molecule type" value="mRNA"/>
</dbReference>
<dbReference type="EMBL" id="AF386078">
    <property type="protein sequence ID" value="AAK60337.1"/>
    <property type="molecule type" value="Genomic_DNA"/>
</dbReference>
<dbReference type="EMBL" id="AL136170">
    <property type="status" value="NOT_ANNOTATED_CDS"/>
    <property type="molecule type" value="Genomic_DNA"/>
</dbReference>
<dbReference type="EMBL" id="CH471067">
    <property type="protein sequence ID" value="EAW90969.1"/>
    <property type="molecule type" value="Genomic_DNA"/>
</dbReference>
<dbReference type="EMBL" id="M21643">
    <property type="protein sequence ID" value="AAA51793.1"/>
    <property type="molecule type" value="Genomic_DNA"/>
</dbReference>
<dbReference type="EMBL" id="M21644">
    <property type="protein sequence ID" value="AAA51794.1"/>
    <property type="molecule type" value="Genomic_DNA"/>
</dbReference>
<dbReference type="EMBL" id="M21643">
    <property type="protein sequence ID" value="AAA51794.1"/>
    <property type="status" value="JOINED"/>
    <property type="molecule type" value="Genomic_DNA"/>
</dbReference>
<dbReference type="EMBL" id="M21642">
    <property type="protein sequence ID" value="AAA51796.1"/>
    <property type="molecule type" value="Genomic_DNA"/>
</dbReference>
<dbReference type="EMBL" id="M21636">
    <property type="protein sequence ID" value="AAA51796.1"/>
    <property type="status" value="JOINED"/>
    <property type="molecule type" value="Genomic_DNA"/>
</dbReference>
<dbReference type="EMBL" id="M21637">
    <property type="protein sequence ID" value="AAA51796.1"/>
    <property type="status" value="JOINED"/>
    <property type="molecule type" value="Genomic_DNA"/>
</dbReference>
<dbReference type="EMBL" id="M21638">
    <property type="protein sequence ID" value="AAA51796.1"/>
    <property type="status" value="JOINED"/>
    <property type="molecule type" value="Genomic_DNA"/>
</dbReference>
<dbReference type="EMBL" id="M21640">
    <property type="protein sequence ID" value="AAA51796.1"/>
    <property type="status" value="JOINED"/>
    <property type="molecule type" value="Genomic_DNA"/>
</dbReference>
<dbReference type="EMBL" id="M21641">
    <property type="protein sequence ID" value="AAA51796.1"/>
    <property type="status" value="JOINED"/>
    <property type="molecule type" value="Genomic_DNA"/>
</dbReference>
<dbReference type="CCDS" id="CCDS1313.1"/>
<dbReference type="PIR" id="A49494">
    <property type="entry name" value="XHHU3"/>
</dbReference>
<dbReference type="RefSeq" id="NP_000479.1">
    <property type="nucleotide sequence ID" value="NM_000488.4"/>
</dbReference>
<dbReference type="PDB" id="1ANT">
    <property type="method" value="X-ray"/>
    <property type="resolution" value="3.00 A"/>
    <property type="chains" value="I/L=33-464"/>
</dbReference>
<dbReference type="PDB" id="1ATH">
    <property type="method" value="X-ray"/>
    <property type="resolution" value="3.20 A"/>
    <property type="chains" value="A/B=33-464"/>
</dbReference>
<dbReference type="PDB" id="1AZX">
    <property type="method" value="X-ray"/>
    <property type="resolution" value="2.90 A"/>
    <property type="chains" value="I/L=33-464"/>
</dbReference>
<dbReference type="PDB" id="1BR8">
    <property type="method" value="X-ray"/>
    <property type="resolution" value="2.90 A"/>
    <property type="chains" value="I/L=33-464"/>
</dbReference>
<dbReference type="PDB" id="1DZG">
    <property type="method" value="X-ray"/>
    <property type="resolution" value="2.80 A"/>
    <property type="chains" value="I/L=33-464"/>
</dbReference>
<dbReference type="PDB" id="1DZH">
    <property type="method" value="X-ray"/>
    <property type="resolution" value="2.85 A"/>
    <property type="chains" value="I/L=33-464"/>
</dbReference>
<dbReference type="PDB" id="1E03">
    <property type="method" value="X-ray"/>
    <property type="resolution" value="2.90 A"/>
    <property type="chains" value="I/L=33-464"/>
</dbReference>
<dbReference type="PDB" id="1E04">
    <property type="method" value="X-ray"/>
    <property type="resolution" value="2.60 A"/>
    <property type="chains" value="I/L=33-464"/>
</dbReference>
<dbReference type="PDB" id="1E05">
    <property type="method" value="X-ray"/>
    <property type="resolution" value="2.62 A"/>
    <property type="chains" value="I/L=33-464"/>
</dbReference>
<dbReference type="PDB" id="1JVQ">
    <property type="method" value="X-ray"/>
    <property type="resolution" value="2.60 A"/>
    <property type="chains" value="I/L=33-464"/>
</dbReference>
<dbReference type="PDB" id="1LK6">
    <property type="method" value="X-ray"/>
    <property type="resolution" value="2.80 A"/>
    <property type="chains" value="I/L=33-464"/>
</dbReference>
<dbReference type="PDB" id="1NQ9">
    <property type="method" value="X-ray"/>
    <property type="resolution" value="2.60 A"/>
    <property type="chains" value="I/L=33-464"/>
</dbReference>
<dbReference type="PDB" id="1OYH">
    <property type="method" value="X-ray"/>
    <property type="resolution" value="2.62 A"/>
    <property type="chains" value="I/L=33-464"/>
</dbReference>
<dbReference type="PDB" id="1R1L">
    <property type="method" value="X-ray"/>
    <property type="resolution" value="2.70 A"/>
    <property type="chains" value="I/L=33-464"/>
</dbReference>
<dbReference type="PDB" id="1SR5">
    <property type="method" value="X-ray"/>
    <property type="resolution" value="3.10 A"/>
    <property type="chains" value="A=33-464"/>
</dbReference>
<dbReference type="PDB" id="1T1F">
    <property type="method" value="X-ray"/>
    <property type="resolution" value="2.75 A"/>
    <property type="chains" value="A/B/C=33-464"/>
</dbReference>
<dbReference type="PDB" id="1TB6">
    <property type="method" value="X-ray"/>
    <property type="resolution" value="2.50 A"/>
    <property type="chains" value="I=33-464"/>
</dbReference>
<dbReference type="PDB" id="2ANT">
    <property type="method" value="X-ray"/>
    <property type="resolution" value="2.60 A"/>
    <property type="chains" value="I/L=33-464"/>
</dbReference>
<dbReference type="PDB" id="2B4X">
    <property type="method" value="X-ray"/>
    <property type="resolution" value="2.80 A"/>
    <property type="chains" value="I/L=37-463"/>
</dbReference>
<dbReference type="PDB" id="2B5T">
    <property type="method" value="X-ray"/>
    <property type="resolution" value="2.10 A"/>
    <property type="chains" value="I=33-464"/>
</dbReference>
<dbReference type="PDB" id="2BEH">
    <property type="method" value="X-ray"/>
    <property type="resolution" value="2.70 A"/>
    <property type="chains" value="I/L=33-464"/>
</dbReference>
<dbReference type="PDB" id="2GD4">
    <property type="method" value="X-ray"/>
    <property type="resolution" value="3.30 A"/>
    <property type="chains" value="C/I=22-464"/>
</dbReference>
<dbReference type="PDB" id="2HIJ">
    <property type="method" value="X-ray"/>
    <property type="resolution" value="2.90 A"/>
    <property type="chains" value="I/L=33-464"/>
</dbReference>
<dbReference type="PDB" id="2ZNH">
    <property type="method" value="X-ray"/>
    <property type="resolution" value="2.80 A"/>
    <property type="chains" value="A/B=33-464"/>
</dbReference>
<dbReference type="PDB" id="3EVJ">
    <property type="method" value="X-ray"/>
    <property type="resolution" value="3.00 A"/>
    <property type="chains" value="I/L=33-464"/>
</dbReference>
<dbReference type="PDB" id="3KCG">
    <property type="method" value="X-ray"/>
    <property type="resolution" value="1.70 A"/>
    <property type="chains" value="I=33-464"/>
</dbReference>
<dbReference type="PDB" id="4EB1">
    <property type="method" value="X-ray"/>
    <property type="resolution" value="2.80 A"/>
    <property type="chains" value="I/L=33-464"/>
</dbReference>
<dbReference type="PDBsum" id="1ANT"/>
<dbReference type="PDBsum" id="1ATH"/>
<dbReference type="PDBsum" id="1AZX"/>
<dbReference type="PDBsum" id="1BR8"/>
<dbReference type="PDBsum" id="1DZG"/>
<dbReference type="PDBsum" id="1DZH"/>
<dbReference type="PDBsum" id="1E03"/>
<dbReference type="PDBsum" id="1E04"/>
<dbReference type="PDBsum" id="1E05"/>
<dbReference type="PDBsum" id="1JVQ"/>
<dbReference type="PDBsum" id="1LK6"/>
<dbReference type="PDBsum" id="1NQ9"/>
<dbReference type="PDBsum" id="1OYH"/>
<dbReference type="PDBsum" id="1R1L"/>
<dbReference type="PDBsum" id="1SR5"/>
<dbReference type="PDBsum" id="1T1F"/>
<dbReference type="PDBsum" id="1TB6"/>
<dbReference type="PDBsum" id="2ANT"/>
<dbReference type="PDBsum" id="2B4X"/>
<dbReference type="PDBsum" id="2B5T"/>
<dbReference type="PDBsum" id="2BEH"/>
<dbReference type="PDBsum" id="2GD4"/>
<dbReference type="PDBsum" id="2HIJ"/>
<dbReference type="PDBsum" id="2ZNH"/>
<dbReference type="PDBsum" id="3EVJ"/>
<dbReference type="PDBsum" id="3KCG"/>
<dbReference type="PDBsum" id="4EB1"/>
<dbReference type="PCDDB" id="P01008"/>
<dbReference type="SMR" id="P01008"/>
<dbReference type="BioGRID" id="106953">
    <property type="interactions" value="51"/>
</dbReference>
<dbReference type="CORUM" id="P01008"/>
<dbReference type="DIP" id="DIP-38009N"/>
<dbReference type="FunCoup" id="P01008">
    <property type="interactions" value="232"/>
</dbReference>
<dbReference type="IntAct" id="P01008">
    <property type="interactions" value="28"/>
</dbReference>
<dbReference type="MINT" id="P01008"/>
<dbReference type="STRING" id="9606.ENSP00000356671"/>
<dbReference type="BindingDB" id="P01008"/>
<dbReference type="ChEMBL" id="CHEMBL1950"/>
<dbReference type="DrugBank" id="DB11598">
    <property type="generic name" value="Antithrombin III human"/>
</dbReference>
<dbReference type="DrugBank" id="DB00407">
    <property type="generic name" value="Ardeparin"/>
</dbReference>
<dbReference type="DrugBank" id="DB09258">
    <property type="generic name" value="Bemiparin"/>
</dbReference>
<dbReference type="DrugBank" id="DB09130">
    <property type="generic name" value="Copper"/>
</dbReference>
<dbReference type="DrugBank" id="DB06779">
    <property type="generic name" value="Dalteparin"/>
</dbReference>
<dbReference type="DrugBank" id="DB06754">
    <property type="generic name" value="Danaparoid"/>
</dbReference>
<dbReference type="DrugBank" id="DB12955">
    <property type="generic name" value="Delparantag"/>
</dbReference>
<dbReference type="DrugBank" id="DB01225">
    <property type="generic name" value="Enoxaparin"/>
</dbReference>
<dbReference type="DrugBank" id="DB00569">
    <property type="generic name" value="Fondaparinux"/>
</dbReference>
<dbReference type="DrugBank" id="DB01109">
    <property type="generic name" value="Heparin"/>
</dbReference>
<dbReference type="DrugBank" id="DB04464">
    <property type="generic name" value="N-Formylmethionine"/>
</dbReference>
<dbReference type="DrugBank" id="DB08813">
    <property type="generic name" value="Nadroparin"/>
</dbReference>
<dbReference type="DrugBank" id="DB05361">
    <property type="generic name" value="SR-123781A"/>
</dbReference>
<dbReference type="DrugBank" id="DB06271">
    <property type="generic name" value="Sulodexide"/>
</dbReference>
<dbReference type="DrugBank" id="DB06822">
    <property type="generic name" value="Tinzaparin"/>
</dbReference>
<dbReference type="DrugCentral" id="P01008"/>
<dbReference type="GuidetoPHARMACOLOGY" id="2632"/>
<dbReference type="MEROPS" id="I04.018"/>
<dbReference type="CarbonylDB" id="P01008"/>
<dbReference type="GlyConnect" id="766">
    <property type="glycosylation" value="21 N-Linked glycans (4 sites)"/>
</dbReference>
<dbReference type="GlyCosmos" id="P01008">
    <property type="glycosylation" value="6 sites, 25 glycans"/>
</dbReference>
<dbReference type="GlyGen" id="P01008">
    <property type="glycosylation" value="10 sites, 104 N-linked glycans (4 sites), 3 O-linked glycans (2 sites)"/>
</dbReference>
<dbReference type="iPTMnet" id="P01008"/>
<dbReference type="PhosphoSitePlus" id="P01008"/>
<dbReference type="BioMuta" id="SERPINC1"/>
<dbReference type="DMDM" id="113936"/>
<dbReference type="REPRODUCTION-2DPAGE" id="P01008"/>
<dbReference type="CPTAC" id="non-CPTAC-1070"/>
<dbReference type="CPTAC" id="non-CPTAC-1071"/>
<dbReference type="CPTAC" id="non-CPTAC-1072"/>
<dbReference type="jPOST" id="P01008"/>
<dbReference type="MassIVE" id="P01008"/>
<dbReference type="PaxDb" id="9606-ENSP00000356671"/>
<dbReference type="PeptideAtlas" id="P01008"/>
<dbReference type="PRIDE" id="P01008"/>
<dbReference type="ProteomicsDB" id="51299"/>
<dbReference type="ABCD" id="P01008">
    <property type="antibodies" value="7 sequenced antibodies"/>
</dbReference>
<dbReference type="Antibodypedia" id="793">
    <property type="antibodies" value="850 antibodies from 43 providers"/>
</dbReference>
<dbReference type="DNASU" id="462"/>
<dbReference type="Ensembl" id="ENST00000367698.4">
    <property type="protein sequence ID" value="ENSP00000356671.3"/>
    <property type="gene ID" value="ENSG00000117601.15"/>
</dbReference>
<dbReference type="GeneID" id="462"/>
<dbReference type="KEGG" id="hsa:462"/>
<dbReference type="MANE-Select" id="ENST00000367698.4">
    <property type="protein sequence ID" value="ENSP00000356671.3"/>
    <property type="RefSeq nucleotide sequence ID" value="NM_000488.4"/>
    <property type="RefSeq protein sequence ID" value="NP_000479.1"/>
</dbReference>
<dbReference type="UCSC" id="uc001gjt.4">
    <property type="organism name" value="human"/>
</dbReference>
<dbReference type="AGR" id="HGNC:775"/>
<dbReference type="CTD" id="462"/>
<dbReference type="DisGeNET" id="462"/>
<dbReference type="GeneCards" id="SERPINC1"/>
<dbReference type="HGNC" id="HGNC:775">
    <property type="gene designation" value="SERPINC1"/>
</dbReference>
<dbReference type="HPA" id="ENSG00000117601">
    <property type="expression patterns" value="Tissue enriched (liver)"/>
</dbReference>
<dbReference type="MalaCards" id="SERPINC1"/>
<dbReference type="MIM" id="107300">
    <property type="type" value="gene"/>
</dbReference>
<dbReference type="MIM" id="613118">
    <property type="type" value="phenotype"/>
</dbReference>
<dbReference type="neXtProt" id="NX_P01008"/>
<dbReference type="OpenTargets" id="ENSG00000117601"/>
<dbReference type="Orphanet" id="82">
    <property type="disease" value="Hereditary thrombophilia due to congenital antithrombin deficiency"/>
</dbReference>
<dbReference type="PharmGKB" id="PA35026"/>
<dbReference type="VEuPathDB" id="HostDB:ENSG00000117601"/>
<dbReference type="eggNOG" id="KOG2392">
    <property type="taxonomic scope" value="Eukaryota"/>
</dbReference>
<dbReference type="GeneTree" id="ENSGT00940000157967"/>
<dbReference type="HOGENOM" id="CLU_023330_0_2_1"/>
<dbReference type="InParanoid" id="P01008"/>
<dbReference type="OMA" id="CQVPTMY"/>
<dbReference type="OrthoDB" id="9440847at2759"/>
<dbReference type="PAN-GO" id="P01008">
    <property type="GO annotations" value="3 GO annotations based on evolutionary models"/>
</dbReference>
<dbReference type="PhylomeDB" id="P01008"/>
<dbReference type="TreeFam" id="TF343094"/>
<dbReference type="PathwayCommons" id="P01008"/>
<dbReference type="Reactome" id="R-HSA-140837">
    <property type="pathway name" value="Intrinsic Pathway of Fibrin Clot Formation"/>
</dbReference>
<dbReference type="Reactome" id="R-HSA-140875">
    <property type="pathway name" value="Common Pathway of Fibrin Clot Formation"/>
</dbReference>
<dbReference type="Reactome" id="R-HSA-381426">
    <property type="pathway name" value="Regulation of Insulin-like Growth Factor (IGF) transport and uptake by Insulin-like Growth Factor Binding Proteins (IGFBPs)"/>
</dbReference>
<dbReference type="Reactome" id="R-HSA-8957275">
    <property type="pathway name" value="Post-translational protein phosphorylation"/>
</dbReference>
<dbReference type="SignaLink" id="P01008"/>
<dbReference type="SIGNOR" id="P01008"/>
<dbReference type="BioGRID-ORCS" id="462">
    <property type="hits" value="13 hits in 1152 CRISPR screens"/>
</dbReference>
<dbReference type="ChiTaRS" id="SERPINC1">
    <property type="organism name" value="human"/>
</dbReference>
<dbReference type="EvolutionaryTrace" id="P01008"/>
<dbReference type="GeneWiki" id="Antithrombin"/>
<dbReference type="GenomeRNAi" id="462"/>
<dbReference type="Pharos" id="P01008">
    <property type="development level" value="Tclin"/>
</dbReference>
<dbReference type="PRO" id="PR:P01008"/>
<dbReference type="Proteomes" id="UP000005640">
    <property type="component" value="Chromosome 1"/>
</dbReference>
<dbReference type="RNAct" id="P01008">
    <property type="molecule type" value="protein"/>
</dbReference>
<dbReference type="Bgee" id="ENSG00000117601">
    <property type="expression patterns" value="Expressed in right lobe of liver and 100 other cell types or tissues"/>
</dbReference>
<dbReference type="ExpressionAtlas" id="P01008">
    <property type="expression patterns" value="baseline and differential"/>
</dbReference>
<dbReference type="GO" id="GO:0072562">
    <property type="term" value="C:blood microparticle"/>
    <property type="evidence" value="ECO:0007005"/>
    <property type="project" value="UniProtKB"/>
</dbReference>
<dbReference type="GO" id="GO:0062023">
    <property type="term" value="C:collagen-containing extracellular matrix"/>
    <property type="evidence" value="ECO:0007005"/>
    <property type="project" value="BHF-UCL"/>
</dbReference>
<dbReference type="GO" id="GO:0005788">
    <property type="term" value="C:endoplasmic reticulum lumen"/>
    <property type="evidence" value="ECO:0000304"/>
    <property type="project" value="Reactome"/>
</dbReference>
<dbReference type="GO" id="GO:0070062">
    <property type="term" value="C:extracellular exosome"/>
    <property type="evidence" value="ECO:0007005"/>
    <property type="project" value="UniProtKB"/>
</dbReference>
<dbReference type="GO" id="GO:0005576">
    <property type="term" value="C:extracellular region"/>
    <property type="evidence" value="ECO:0000304"/>
    <property type="project" value="Reactome"/>
</dbReference>
<dbReference type="GO" id="GO:0005615">
    <property type="term" value="C:extracellular space"/>
    <property type="evidence" value="ECO:0000314"/>
    <property type="project" value="BHF-UCL"/>
</dbReference>
<dbReference type="GO" id="GO:0005886">
    <property type="term" value="C:plasma membrane"/>
    <property type="evidence" value="ECO:0000304"/>
    <property type="project" value="Reactome"/>
</dbReference>
<dbReference type="GO" id="GO:0008201">
    <property type="term" value="F:heparin binding"/>
    <property type="evidence" value="ECO:0007669"/>
    <property type="project" value="UniProtKB-KW"/>
</dbReference>
<dbReference type="GO" id="GO:0042802">
    <property type="term" value="F:identical protein binding"/>
    <property type="evidence" value="ECO:0000353"/>
    <property type="project" value="IntAct"/>
</dbReference>
<dbReference type="GO" id="GO:0002020">
    <property type="term" value="F:protease binding"/>
    <property type="evidence" value="ECO:0000353"/>
    <property type="project" value="UniProtKB"/>
</dbReference>
<dbReference type="GO" id="GO:0004867">
    <property type="term" value="F:serine-type endopeptidase inhibitor activity"/>
    <property type="evidence" value="ECO:0000318"/>
    <property type="project" value="GO_Central"/>
</dbReference>
<dbReference type="GO" id="GO:0007596">
    <property type="term" value="P:blood coagulation"/>
    <property type="evidence" value="ECO:0007669"/>
    <property type="project" value="UniProtKB-KW"/>
</dbReference>
<dbReference type="GO" id="GO:0030193">
    <property type="term" value="P:regulation of blood coagulation"/>
    <property type="evidence" value="ECO:0007669"/>
    <property type="project" value="InterPro"/>
</dbReference>
<dbReference type="CDD" id="cd02045">
    <property type="entry name" value="serpinC1_AT3"/>
    <property type="match status" value="1"/>
</dbReference>
<dbReference type="FunFam" id="3.30.497.10:FF:000008">
    <property type="entry name" value="antithrombin-III isoform X1"/>
    <property type="match status" value="1"/>
</dbReference>
<dbReference type="FunFam" id="2.30.39.10:FF:000030">
    <property type="entry name" value="Serpin 2"/>
    <property type="match status" value="1"/>
</dbReference>
<dbReference type="Gene3D" id="2.30.39.10">
    <property type="entry name" value="Alpha-1-antitrypsin, domain 1"/>
    <property type="match status" value="1"/>
</dbReference>
<dbReference type="Gene3D" id="3.30.497.10">
    <property type="entry name" value="Antithrombin, subunit I, domain 2"/>
    <property type="match status" value="1"/>
</dbReference>
<dbReference type="InterPro" id="IPR033829">
    <property type="entry name" value="Antithrombin_3_serpin_domain"/>
</dbReference>
<dbReference type="InterPro" id="IPR023795">
    <property type="entry name" value="Serpin_CS"/>
</dbReference>
<dbReference type="InterPro" id="IPR023796">
    <property type="entry name" value="Serpin_dom"/>
</dbReference>
<dbReference type="InterPro" id="IPR000215">
    <property type="entry name" value="Serpin_fam"/>
</dbReference>
<dbReference type="InterPro" id="IPR036186">
    <property type="entry name" value="Serpin_sf"/>
</dbReference>
<dbReference type="InterPro" id="IPR042178">
    <property type="entry name" value="Serpin_sf_1"/>
</dbReference>
<dbReference type="InterPro" id="IPR042185">
    <property type="entry name" value="Serpin_sf_2"/>
</dbReference>
<dbReference type="PANTHER" id="PTHR11461:SF53">
    <property type="entry name" value="ANTITHROMBIN-III"/>
    <property type="match status" value="1"/>
</dbReference>
<dbReference type="PANTHER" id="PTHR11461">
    <property type="entry name" value="SERINE PROTEASE INHIBITOR, SERPIN"/>
    <property type="match status" value="1"/>
</dbReference>
<dbReference type="Pfam" id="PF00079">
    <property type="entry name" value="Serpin"/>
    <property type="match status" value="1"/>
</dbReference>
<dbReference type="SMART" id="SM00093">
    <property type="entry name" value="SERPIN"/>
    <property type="match status" value="1"/>
</dbReference>
<dbReference type="SUPFAM" id="SSF56574">
    <property type="entry name" value="Serpins"/>
    <property type="match status" value="1"/>
</dbReference>
<dbReference type="PROSITE" id="PS00284">
    <property type="entry name" value="SERPIN"/>
    <property type="match status" value="1"/>
</dbReference>
<reference key="1">
    <citation type="journal article" date="1982" name="Nucleic Acids Res.">
        <title>Cloning and expression of the cDNA for human antithrombin III.</title>
        <authorList>
            <person name="Bock S.C."/>
            <person name="Wion K.L."/>
            <person name="Vehar G.A."/>
            <person name="Lawn R.M."/>
        </authorList>
    </citation>
    <scope>NUCLEOTIDE SEQUENCE [GENOMIC DNA]</scope>
</reference>
<reference key="2">
    <citation type="journal article" date="1983" name="Proc. Natl. Acad. Sci. U.S.A.">
        <title>Isolation and sequence characterization of a cDNA clone of human antithrombin III.</title>
        <authorList>
            <person name="Chandra T."/>
            <person name="Stackhouse R."/>
            <person name="Kidd V.J."/>
            <person name="Woo S.L.C."/>
        </authorList>
    </citation>
    <scope>NUCLEOTIDE SEQUENCE [MRNA]</scope>
</reference>
<reference key="3">
    <citation type="book" date="1992" name="Molecular approaches to the study and treatment of Human diseases">
        <title>Hereditary antithrombin III deficiency: identification of an arginine-406 to methionine point mutation near protease reactive site.</title>
        <editorList>
            <person name="Yoshida T.O."/>
            <person name="Wilson J.M."/>
        </editorList>
        <authorList>
            <person name="Tsuji H."/>
            <person name="Takada O."/>
            <person name="Nakagawa M."/>
            <person name="Tanaka S."/>
            <person name="Hashimoto-Gotoh T."/>
        </authorList>
    </citation>
    <scope>NUCLEOTIDE SEQUENCE [MRNA]</scope>
    <scope>VARIANT AT3D MET-438</scope>
</reference>
<reference key="4">
    <citation type="journal article" date="1993" name="Biochemistry">
        <title>Complete nucleotide sequence of the antithrombin gene: evidence for homologous recombination causing thrombophilia.</title>
        <authorList>
            <person name="Olds R.J."/>
            <person name="Lane D.A."/>
            <person name="Chowdhury V."/>
            <person name="de Stefano V."/>
            <person name="Leone G."/>
            <person name="Thein S.L."/>
        </authorList>
    </citation>
    <scope>NUCLEOTIDE SEQUENCE [GENOMIC DNA]</scope>
</reference>
<reference key="5">
    <citation type="submission" date="1999-02" db="EMBL/GenBank/DDBJ databases">
        <title>Functional prediction of the coding sequences of 75 new genes deduced by analysis of cDNA clones from human fetal liver.</title>
        <authorList>
            <person name="Zhang C."/>
            <person name="Yu Y."/>
            <person name="Zhang S."/>
            <person name="Wei H."/>
            <person name="Bi J."/>
            <person name="Zhou G."/>
            <person name="Dong C."/>
            <person name="Zai Y."/>
            <person name="Xu W."/>
            <person name="Gao F."/>
            <person name="Liu M."/>
            <person name="He F."/>
        </authorList>
    </citation>
    <scope>NUCLEOTIDE SEQUENCE [LARGE SCALE MRNA]</scope>
    <source>
        <tissue>Fetal liver</tissue>
    </source>
</reference>
<reference key="6">
    <citation type="journal article" date="2004" name="Nat. Genet.">
        <title>Complete sequencing and characterization of 21,243 full-length human cDNAs.</title>
        <authorList>
            <person name="Ota T."/>
            <person name="Suzuki Y."/>
            <person name="Nishikawa T."/>
            <person name="Otsuki T."/>
            <person name="Sugiyama T."/>
            <person name="Irie R."/>
            <person name="Wakamatsu A."/>
            <person name="Hayashi K."/>
            <person name="Sato H."/>
            <person name="Nagai K."/>
            <person name="Kimura K."/>
            <person name="Makita H."/>
            <person name="Sekine M."/>
            <person name="Obayashi M."/>
            <person name="Nishi T."/>
            <person name="Shibahara T."/>
            <person name="Tanaka T."/>
            <person name="Ishii S."/>
            <person name="Yamamoto J."/>
            <person name="Saito K."/>
            <person name="Kawai Y."/>
            <person name="Isono Y."/>
            <person name="Nakamura Y."/>
            <person name="Nagahari K."/>
            <person name="Murakami K."/>
            <person name="Yasuda T."/>
            <person name="Iwayanagi T."/>
            <person name="Wagatsuma M."/>
            <person name="Shiratori A."/>
            <person name="Sudo H."/>
            <person name="Hosoiri T."/>
            <person name="Kaku Y."/>
            <person name="Kodaira H."/>
            <person name="Kondo H."/>
            <person name="Sugawara M."/>
            <person name="Takahashi M."/>
            <person name="Kanda K."/>
            <person name="Yokoi T."/>
            <person name="Furuya T."/>
            <person name="Kikkawa E."/>
            <person name="Omura Y."/>
            <person name="Abe K."/>
            <person name="Kamihara K."/>
            <person name="Katsuta N."/>
            <person name="Sato K."/>
            <person name="Tanikawa M."/>
            <person name="Yamazaki M."/>
            <person name="Ninomiya K."/>
            <person name="Ishibashi T."/>
            <person name="Yamashita H."/>
            <person name="Murakawa K."/>
            <person name="Fujimori K."/>
            <person name="Tanai H."/>
            <person name="Kimata M."/>
            <person name="Watanabe M."/>
            <person name="Hiraoka S."/>
            <person name="Chiba Y."/>
            <person name="Ishida S."/>
            <person name="Ono Y."/>
            <person name="Takiguchi S."/>
            <person name="Watanabe S."/>
            <person name="Yosida M."/>
            <person name="Hotuta T."/>
            <person name="Kusano J."/>
            <person name="Kanehori K."/>
            <person name="Takahashi-Fujii A."/>
            <person name="Hara H."/>
            <person name="Tanase T.-O."/>
            <person name="Nomura Y."/>
            <person name="Togiya S."/>
            <person name="Komai F."/>
            <person name="Hara R."/>
            <person name="Takeuchi K."/>
            <person name="Arita M."/>
            <person name="Imose N."/>
            <person name="Musashino K."/>
            <person name="Yuuki H."/>
            <person name="Oshima A."/>
            <person name="Sasaki N."/>
            <person name="Aotsuka S."/>
            <person name="Yoshikawa Y."/>
            <person name="Matsunawa H."/>
            <person name="Ichihara T."/>
            <person name="Shiohata N."/>
            <person name="Sano S."/>
            <person name="Moriya S."/>
            <person name="Momiyama H."/>
            <person name="Satoh N."/>
            <person name="Takami S."/>
            <person name="Terashima Y."/>
            <person name="Suzuki O."/>
            <person name="Nakagawa S."/>
            <person name="Senoh A."/>
            <person name="Mizoguchi H."/>
            <person name="Goto Y."/>
            <person name="Shimizu F."/>
            <person name="Wakebe H."/>
            <person name="Hishigaki H."/>
            <person name="Watanabe T."/>
            <person name="Sugiyama A."/>
            <person name="Takemoto M."/>
            <person name="Kawakami B."/>
            <person name="Yamazaki M."/>
            <person name="Watanabe K."/>
            <person name="Kumagai A."/>
            <person name="Itakura S."/>
            <person name="Fukuzumi Y."/>
            <person name="Fujimori Y."/>
            <person name="Komiyama M."/>
            <person name="Tashiro H."/>
            <person name="Tanigami A."/>
            <person name="Fujiwara T."/>
            <person name="Ono T."/>
            <person name="Yamada K."/>
            <person name="Fujii Y."/>
            <person name="Ozaki K."/>
            <person name="Hirao M."/>
            <person name="Ohmori Y."/>
            <person name="Kawabata A."/>
            <person name="Hikiji T."/>
            <person name="Kobatake N."/>
            <person name="Inagaki H."/>
            <person name="Ikema Y."/>
            <person name="Okamoto S."/>
            <person name="Okitani R."/>
            <person name="Kawakami T."/>
            <person name="Noguchi S."/>
            <person name="Itoh T."/>
            <person name="Shigeta K."/>
            <person name="Senba T."/>
            <person name="Matsumura K."/>
            <person name="Nakajima Y."/>
            <person name="Mizuno T."/>
            <person name="Morinaga M."/>
            <person name="Sasaki M."/>
            <person name="Togashi T."/>
            <person name="Oyama M."/>
            <person name="Hata H."/>
            <person name="Watanabe M."/>
            <person name="Komatsu T."/>
            <person name="Mizushima-Sugano J."/>
            <person name="Satoh T."/>
            <person name="Shirai Y."/>
            <person name="Takahashi Y."/>
            <person name="Nakagawa K."/>
            <person name="Okumura K."/>
            <person name="Nagase T."/>
            <person name="Nomura N."/>
            <person name="Kikuchi H."/>
            <person name="Masuho Y."/>
            <person name="Yamashita R."/>
            <person name="Nakai K."/>
            <person name="Yada T."/>
            <person name="Nakamura Y."/>
            <person name="Ohara O."/>
            <person name="Isogai T."/>
            <person name="Sugano S."/>
        </authorList>
    </citation>
    <scope>NUCLEOTIDE SEQUENCE [LARGE SCALE MRNA]</scope>
    <source>
        <tissue>Liver</tissue>
    </source>
</reference>
<reference key="7">
    <citation type="submission" date="2001-06" db="EMBL/GenBank/DDBJ databases">
        <authorList>
            <consortium name="SeattleSNPs variation discovery resource"/>
        </authorList>
    </citation>
    <scope>NUCLEOTIDE SEQUENCE [GENOMIC DNA]</scope>
    <scope>VARIANTS GLU-30 AND ALA-147</scope>
</reference>
<reference key="8">
    <citation type="journal article" date="2006" name="Nature">
        <title>The DNA sequence and biological annotation of human chromosome 1.</title>
        <authorList>
            <person name="Gregory S.G."/>
            <person name="Barlow K.F."/>
            <person name="McLay K.E."/>
            <person name="Kaul R."/>
            <person name="Swarbreck D."/>
            <person name="Dunham A."/>
            <person name="Scott C.E."/>
            <person name="Howe K.L."/>
            <person name="Woodfine K."/>
            <person name="Spencer C.C.A."/>
            <person name="Jones M.C."/>
            <person name="Gillson C."/>
            <person name="Searle S."/>
            <person name="Zhou Y."/>
            <person name="Kokocinski F."/>
            <person name="McDonald L."/>
            <person name="Evans R."/>
            <person name="Phillips K."/>
            <person name="Atkinson A."/>
            <person name="Cooper R."/>
            <person name="Jones C."/>
            <person name="Hall R.E."/>
            <person name="Andrews T.D."/>
            <person name="Lloyd C."/>
            <person name="Ainscough R."/>
            <person name="Almeida J.P."/>
            <person name="Ambrose K.D."/>
            <person name="Anderson F."/>
            <person name="Andrew R.W."/>
            <person name="Ashwell R.I.S."/>
            <person name="Aubin K."/>
            <person name="Babbage A.K."/>
            <person name="Bagguley C.L."/>
            <person name="Bailey J."/>
            <person name="Beasley H."/>
            <person name="Bethel G."/>
            <person name="Bird C.P."/>
            <person name="Bray-Allen S."/>
            <person name="Brown J.Y."/>
            <person name="Brown A.J."/>
            <person name="Buckley D."/>
            <person name="Burton J."/>
            <person name="Bye J."/>
            <person name="Carder C."/>
            <person name="Chapman J.C."/>
            <person name="Clark S.Y."/>
            <person name="Clarke G."/>
            <person name="Clee C."/>
            <person name="Cobley V."/>
            <person name="Collier R.E."/>
            <person name="Corby N."/>
            <person name="Coville G.J."/>
            <person name="Davies J."/>
            <person name="Deadman R."/>
            <person name="Dunn M."/>
            <person name="Earthrowl M."/>
            <person name="Ellington A.G."/>
            <person name="Errington H."/>
            <person name="Frankish A."/>
            <person name="Frankland J."/>
            <person name="French L."/>
            <person name="Garner P."/>
            <person name="Garnett J."/>
            <person name="Gay L."/>
            <person name="Ghori M.R.J."/>
            <person name="Gibson R."/>
            <person name="Gilby L.M."/>
            <person name="Gillett W."/>
            <person name="Glithero R.J."/>
            <person name="Grafham D.V."/>
            <person name="Griffiths C."/>
            <person name="Griffiths-Jones S."/>
            <person name="Grocock R."/>
            <person name="Hammond S."/>
            <person name="Harrison E.S.I."/>
            <person name="Hart E."/>
            <person name="Haugen E."/>
            <person name="Heath P.D."/>
            <person name="Holmes S."/>
            <person name="Holt K."/>
            <person name="Howden P.J."/>
            <person name="Hunt A.R."/>
            <person name="Hunt S.E."/>
            <person name="Hunter G."/>
            <person name="Isherwood J."/>
            <person name="James R."/>
            <person name="Johnson C."/>
            <person name="Johnson D."/>
            <person name="Joy A."/>
            <person name="Kay M."/>
            <person name="Kershaw J.K."/>
            <person name="Kibukawa M."/>
            <person name="Kimberley A.M."/>
            <person name="King A."/>
            <person name="Knights A.J."/>
            <person name="Lad H."/>
            <person name="Laird G."/>
            <person name="Lawlor S."/>
            <person name="Leongamornlert D.A."/>
            <person name="Lloyd D.M."/>
            <person name="Loveland J."/>
            <person name="Lovell J."/>
            <person name="Lush M.J."/>
            <person name="Lyne R."/>
            <person name="Martin S."/>
            <person name="Mashreghi-Mohammadi M."/>
            <person name="Matthews L."/>
            <person name="Matthews N.S.W."/>
            <person name="McLaren S."/>
            <person name="Milne S."/>
            <person name="Mistry S."/>
            <person name="Moore M.J.F."/>
            <person name="Nickerson T."/>
            <person name="O'Dell C.N."/>
            <person name="Oliver K."/>
            <person name="Palmeiri A."/>
            <person name="Palmer S.A."/>
            <person name="Parker A."/>
            <person name="Patel D."/>
            <person name="Pearce A.V."/>
            <person name="Peck A.I."/>
            <person name="Pelan S."/>
            <person name="Phelps K."/>
            <person name="Phillimore B.J."/>
            <person name="Plumb R."/>
            <person name="Rajan J."/>
            <person name="Raymond C."/>
            <person name="Rouse G."/>
            <person name="Saenphimmachak C."/>
            <person name="Sehra H.K."/>
            <person name="Sheridan E."/>
            <person name="Shownkeen R."/>
            <person name="Sims S."/>
            <person name="Skuce C.D."/>
            <person name="Smith M."/>
            <person name="Steward C."/>
            <person name="Subramanian S."/>
            <person name="Sycamore N."/>
            <person name="Tracey A."/>
            <person name="Tromans A."/>
            <person name="Van Helmond Z."/>
            <person name="Wall M."/>
            <person name="Wallis J.M."/>
            <person name="White S."/>
            <person name="Whitehead S.L."/>
            <person name="Wilkinson J.E."/>
            <person name="Willey D.L."/>
            <person name="Williams H."/>
            <person name="Wilming L."/>
            <person name="Wray P.W."/>
            <person name="Wu Z."/>
            <person name="Coulson A."/>
            <person name="Vaudin M."/>
            <person name="Sulston J.E."/>
            <person name="Durbin R.M."/>
            <person name="Hubbard T."/>
            <person name="Wooster R."/>
            <person name="Dunham I."/>
            <person name="Carter N.P."/>
            <person name="McVean G."/>
            <person name="Ross M.T."/>
            <person name="Harrow J."/>
            <person name="Olson M.V."/>
            <person name="Beck S."/>
            <person name="Rogers J."/>
            <person name="Bentley D.R."/>
        </authorList>
    </citation>
    <scope>NUCLEOTIDE SEQUENCE [LARGE SCALE GENOMIC DNA]</scope>
</reference>
<reference key="9">
    <citation type="submission" date="2005-07" db="EMBL/GenBank/DDBJ databases">
        <authorList>
            <person name="Mural R.J."/>
            <person name="Istrail S."/>
            <person name="Sutton G.G."/>
            <person name="Florea L."/>
            <person name="Halpern A.L."/>
            <person name="Mobarry C.M."/>
            <person name="Lippert R."/>
            <person name="Walenz B."/>
            <person name="Shatkay H."/>
            <person name="Dew I."/>
            <person name="Miller J.R."/>
            <person name="Flanigan M.J."/>
            <person name="Edwards N.J."/>
            <person name="Bolanos R."/>
            <person name="Fasulo D."/>
            <person name="Halldorsson B.V."/>
            <person name="Hannenhalli S."/>
            <person name="Turner R."/>
            <person name="Yooseph S."/>
            <person name="Lu F."/>
            <person name="Nusskern D.R."/>
            <person name="Shue B.C."/>
            <person name="Zheng X.H."/>
            <person name="Zhong F."/>
            <person name="Delcher A.L."/>
            <person name="Huson D.H."/>
            <person name="Kravitz S.A."/>
            <person name="Mouchard L."/>
            <person name="Reinert K."/>
            <person name="Remington K.A."/>
            <person name="Clark A.G."/>
            <person name="Waterman M.S."/>
            <person name="Eichler E.E."/>
            <person name="Adams M.D."/>
            <person name="Hunkapiller M.W."/>
            <person name="Myers E.W."/>
            <person name="Venter J.C."/>
        </authorList>
    </citation>
    <scope>NUCLEOTIDE SEQUENCE [LARGE SCALE GENOMIC DNA]</scope>
</reference>
<reference key="10">
    <citation type="book" date="1979" name="The physiological inhibitors of blood coagulation and fibrinolysis">
        <title>Primary structure of antithrombin-III (heparin cofactor). Partial homology between alpha-1-antitrypsin and antithrombin-III.</title>
        <editorList>
            <person name="Collen D."/>
            <person name="Wiman B."/>
            <person name="Verstraete M."/>
        </editorList>
        <authorList>
            <person name="Petersen T.E."/>
            <person name="Dudek-Wojciechowska G."/>
            <person name="Sottrup-Jensen L."/>
            <person name="Magnusson S."/>
        </authorList>
    </citation>
    <scope>PROTEIN SEQUENCE OF 33-464</scope>
    <scope>GLYCOSYLATION AT ASN-128; ASN-167; ASN-187 AND ASN-224</scope>
    <scope>DISULFIDE BONDS</scope>
</reference>
<reference key="11">
    <citation type="journal article" date="1983" name="J. Biol. Chem.">
        <title>Isolation of a cDNA clone for human antithrombin III.</title>
        <authorList>
            <person name="Prochownik E.V."/>
            <person name="Markham A.F."/>
            <person name="Orkin S.H."/>
        </authorList>
    </citation>
    <scope>NUCLEOTIDE SEQUENCE [MRNA] OF 42-464</scope>
</reference>
<reference key="12">
    <citation type="journal article" date="1988" name="Biochemistry">
        <title>Antithrombin III Utah: proline-407 to leucine mutation in a highly conserved region near the inhibitor reactive site.</title>
        <authorList>
            <person name="Bock S.C."/>
            <person name="Marrinan J.A."/>
            <person name="Radziejewska E."/>
        </authorList>
    </citation>
    <scope>NUCLEOTIDE SEQUENCE [GENOMIC DNA] OF 137-208</scope>
    <scope>VARIANT AT3D LEU-439</scope>
</reference>
<reference key="13">
    <citation type="journal article" date="1995" name="Br. J. Haematol.">
        <title>Antithrombin-TRI (Ala382 to Thr) causing severe thromboembolic tendency undergoes the S-to-R transition and is associated with a plasma-inactive high-molecular-weight complex of aggregated antithrombin.</title>
        <authorList>
            <person name="Lindo V.S."/>
            <person name="Kakkar V.V."/>
            <person name="Learmonth M."/>
            <person name="Melissari E."/>
            <person name="Zappacosta F."/>
            <person name="Panico M."/>
            <person name="Morris H.R."/>
        </authorList>
    </citation>
    <scope>PROTEIN SEQUENCE OF 371-425</scope>
    <scope>MASS SPECTROMETRY</scope>
    <scope>VARIANT AT3D THR-414</scope>
    <source>
        <tissue>Plasma</tissue>
    </source>
</reference>
<reference key="14">
    <citation type="journal article" date="1981" name="FEBS Lett.">
        <title>The site in human antithrombin for functional proteolytic cleavage by human thrombin.</title>
        <authorList>
            <person name="Bjoerk I."/>
            <person name="Danielsson A."/>
            <person name="Fenton J.W. II"/>
            <person name="Joernvall H."/>
        </authorList>
    </citation>
    <scope>REACTIVE SITE</scope>
</reference>
<reference key="15">
    <citation type="journal article" date="1984" name="J. Biol. Chem.">
        <title>The heparin-binding site of antithrombin III. Identification of a critical tryptophan in the amino acid sequence.</title>
        <authorList>
            <person name="Blackburn M.N."/>
            <person name="Smith R.L."/>
            <person name="Carson J."/>
            <person name="Sibley C.C."/>
        </authorList>
    </citation>
    <scope>HEPARIN-BINDING SITE</scope>
</reference>
<reference key="16">
    <citation type="journal article" date="2004" name="Mol. Cell. Proteomics">
        <title>A proteomic analysis of human bile.</title>
        <authorList>
            <person name="Kristiansen T.Z."/>
            <person name="Bunkenborg J."/>
            <person name="Gronborg M."/>
            <person name="Molina H."/>
            <person name="Thuluvath P.J."/>
            <person name="Argani P."/>
            <person name="Goggins M.G."/>
            <person name="Maitra A."/>
            <person name="Pandey A."/>
        </authorList>
    </citation>
    <scope>GLYCOSYLATION [LARGE SCALE ANALYSIS] AT ASN-187</scope>
    <source>
        <tissue>Bile</tissue>
    </source>
</reference>
<reference key="17">
    <citation type="journal article" date="2004" name="Proteomics">
        <title>Screening for N-glycosylated proteins by liquid chromatography mass spectrometry.</title>
        <authorList>
            <person name="Bunkenborg J."/>
            <person name="Pilch B.J."/>
            <person name="Podtelejnikov A.V."/>
            <person name="Wisniewski J.R."/>
        </authorList>
    </citation>
    <scope>GLYCOSYLATION [LARGE SCALE ANALYSIS] AT ASN-128 AND ASN-187</scope>
    <source>
        <tissue>Plasma</tissue>
    </source>
</reference>
<reference key="18">
    <citation type="journal article" date="2005" name="Biochem. J.">
        <title>Matriptase-3 is a novel phylogenetically preserved membrane-anchored serine protease with broad serpin reactivity.</title>
        <authorList>
            <person name="Szabo R."/>
            <person name="Netzel-Arnett S."/>
            <person name="Hobson J.P."/>
            <person name="Antalis T.M."/>
            <person name="Bugge T.H."/>
        </authorList>
    </citation>
    <scope>FUNCTION IN MEMBRANE-ANCHORED SERINE PROTEASE TMPRSS7 INHIBITION</scope>
    <scope>HETERODIMER WITH TMPRSS7</scope>
</reference>
<reference key="19">
    <citation type="journal article" date="2005" name="J. Proteome Res.">
        <title>Human plasma N-glycoproteome analysis by immunoaffinity subtraction, hydrazide chemistry, and mass spectrometry.</title>
        <authorList>
            <person name="Liu T."/>
            <person name="Qian W.-J."/>
            <person name="Gritsenko M.A."/>
            <person name="Camp D.G. II"/>
            <person name="Monroe M.E."/>
            <person name="Moore R.J."/>
            <person name="Smith R.D."/>
        </authorList>
    </citation>
    <scope>GLYCOSYLATION [LARGE SCALE ANALYSIS] AT ASN-128; ASN-187 AND ASN-224</scope>
    <source>
        <tissue>Plasma</tissue>
    </source>
</reference>
<reference key="20">
    <citation type="journal article" date="2006" name="Mol. Cell. Proteomics">
        <title>Elucidation of N-glycosylation sites on human platelet proteins: a glycoproteomic approach.</title>
        <authorList>
            <person name="Lewandrowski U."/>
            <person name="Moebius J."/>
            <person name="Walter U."/>
            <person name="Sickmann A."/>
        </authorList>
    </citation>
    <scope>GLYCOSYLATION [LARGE SCALE ANALYSIS] AT ASN-224</scope>
    <source>
        <tissue>Platelet</tissue>
    </source>
</reference>
<reference key="21">
    <citation type="journal article" date="2009" name="J. Proteome Res.">
        <title>Glycoproteomics analysis of human liver tissue by combination of multiple enzyme digestion and hydrazide chemistry.</title>
        <authorList>
            <person name="Chen R."/>
            <person name="Jiang X."/>
            <person name="Sun D."/>
            <person name="Han G."/>
            <person name="Wang F."/>
            <person name="Ye M."/>
            <person name="Wang L."/>
            <person name="Zou H."/>
        </authorList>
    </citation>
    <scope>GLYCOSYLATION [LARGE SCALE ANALYSIS] AT ASN-128 AND ASN-187</scope>
    <source>
        <tissue>Liver</tissue>
    </source>
</reference>
<reference key="22">
    <citation type="journal article" date="2009" name="Nat. Methods">
        <title>Enrichment of glycopeptides for glycan structure and attachment site identification.</title>
        <authorList>
            <person name="Nilsson J."/>
            <person name="Rueetschi U."/>
            <person name="Halim A."/>
            <person name="Hesse C."/>
            <person name="Carlsohn E."/>
            <person name="Brinkmalm G."/>
            <person name="Larson G."/>
        </authorList>
    </citation>
    <scope>GLYCOSYLATION [LARGE SCALE ANALYSIS] AT ASN-187</scope>
    <scope>STRUCTURE OF CARBOHYDRATES</scope>
    <source>
        <tissue>Cerebrospinal fluid</tissue>
    </source>
</reference>
<reference key="23">
    <citation type="journal article" date="2011" name="BMC Syst. Biol.">
        <title>Initial characterization of the human central proteome.</title>
        <authorList>
            <person name="Burkard T.R."/>
            <person name="Planyavsky M."/>
            <person name="Kaupe I."/>
            <person name="Breitwieser F.P."/>
            <person name="Buerckstuemmer T."/>
            <person name="Bennett K.L."/>
            <person name="Superti-Furga G."/>
            <person name="Colinge J."/>
        </authorList>
    </citation>
    <scope>IDENTIFICATION BY MASS SPECTROMETRY [LARGE SCALE ANALYSIS]</scope>
</reference>
<reference key="24">
    <citation type="journal article" date="2014" name="J. Proteomics">
        <title>An enzyme assisted RP-RPLC approach for in-depth analysis of human liver phosphoproteome.</title>
        <authorList>
            <person name="Bian Y."/>
            <person name="Song C."/>
            <person name="Cheng K."/>
            <person name="Dong M."/>
            <person name="Wang F."/>
            <person name="Huang J."/>
            <person name="Sun D."/>
            <person name="Wang L."/>
            <person name="Ye M."/>
            <person name="Zou H."/>
        </authorList>
    </citation>
    <scope>PHOSPHORYLATION [LARGE SCALE ANALYSIS] AT SER-68</scope>
    <scope>IDENTIFICATION BY MASS SPECTROMETRY [LARGE SCALE ANALYSIS]</scope>
    <source>
        <tissue>Liver</tissue>
    </source>
</reference>
<reference key="25">
    <citation type="journal article" date="2015" name="Cell">
        <title>A single kinase generates the majority of the secreted phosphoproteome.</title>
        <authorList>
            <person name="Tagliabracci V.S."/>
            <person name="Wiley S.E."/>
            <person name="Guo X."/>
            <person name="Kinch L.N."/>
            <person name="Durrant E."/>
            <person name="Wen J."/>
            <person name="Xiao J."/>
            <person name="Cui J."/>
            <person name="Nguyen K.B."/>
            <person name="Engel J.L."/>
            <person name="Coon J.J."/>
            <person name="Grishin N."/>
            <person name="Pinna L.A."/>
            <person name="Pagliarini D.J."/>
            <person name="Dixon J.E."/>
        </authorList>
    </citation>
    <scope>PHOSPHORYLATION AT THR-63 AND SER-68</scope>
</reference>
<reference key="26">
    <citation type="journal article" date="1994" name="Structure">
        <title>Biological implications of a 3 A structure of dimeric antithrombin.</title>
        <authorList>
            <person name="Carrell R.W."/>
            <person name="Stein P.E."/>
            <person name="Fermi G."/>
            <person name="Wardell M.R."/>
        </authorList>
    </citation>
    <scope>X-RAY CRYSTALLOGRAPHY (3.0 ANGSTROMS)</scope>
</reference>
<reference key="27">
    <citation type="journal article" date="1994" name="Nat. Struct. Biol.">
        <title>The intact and cleaved human antithrombin III complex as a model for serpin-proteinase interactions.</title>
        <authorList>
            <person name="Schreuder H.A."/>
            <person name="de Boer B."/>
            <person name="Dijkema R."/>
            <person name="Mulders J."/>
            <person name="Theunissen H.J.M."/>
            <person name="Grootenhuis P.D.J."/>
            <person name="Hol W.G.J."/>
        </authorList>
    </citation>
    <scope>X-RAY CRYSTALLOGRAPHY (3.2 ANGSTROMS)</scope>
</reference>
<reference key="28">
    <citation type="journal article" date="1997" name="J. Mol. Biol.">
        <title>The 2.6 A structure of antithrombin indicates a conformational change at the heparin binding site.</title>
        <authorList>
            <person name="Skinner R."/>
            <person name="Abrahams J.P."/>
            <person name="Whisstock J.C."/>
            <person name="Lesk A.M."/>
            <person name="Carrel R.W."/>
            <person name="Wardell M.R."/>
        </authorList>
    </citation>
    <scope>X-RAY CRYSTALLOGRAPHY (2.6 ANGSTROMS)</scope>
</reference>
<reference key="29">
    <citation type="journal article" date="1998" name="J. Mol. Biol.">
        <title>Implications for function and therapy of a 2.9 A structure of binary-complexed antithrombin.</title>
        <authorList>
            <person name="Skinner R."/>
            <person name="Chang W.-S.W."/>
            <person name="Jin L."/>
            <person name="Pei X.Y."/>
            <person name="Huntington J.A."/>
            <person name="Abrahams J.P."/>
            <person name="Carrell R.W."/>
            <person name="Lomas D.A."/>
        </authorList>
    </citation>
    <scope>X-RAY CRYSTALLOGRAPHY (2.9 ANGSTROMS)</scope>
</reference>
<reference key="30">
    <citation type="journal article" date="1990" name="Biochimie">
        <title>Antithrombin III: structural and functional aspects.</title>
        <authorList>
            <person name="Mourey L."/>
            <person name="Samama J.-P."/>
            <person name="Delarue M."/>
            <person name="Choay J."/>
            <person name="Lormeau J.C."/>
            <person name="Petitou M."/>
            <person name="Moras D."/>
        </authorList>
    </citation>
    <scope>REVIEW</scope>
</reference>
<reference key="31">
    <citation type="journal article" date="1993" name="Thromb. Haemost.">
        <title>Antithrombin III mutation database: first update. For the Thrombin and its Inhibitors Subcommittee of the Scientific and Standardization Committee of the International Society on Thrombosis and Haemostasis.</title>
        <authorList>
            <person name="Lane D.A."/>
            <person name="Olds R.J."/>
            <person name="Boisclair M."/>
            <person name="Chowdhury V."/>
            <person name="Thein S.L."/>
            <person name="Cooper D.N."/>
            <person name="Blajchman M."/>
            <person name="Perry D."/>
            <person name="Emmerich J."/>
            <person name="Aiach M."/>
        </authorList>
    </citation>
    <scope>REVIEW ON VARIANTS</scope>
</reference>
<reference key="32">
    <citation type="journal article" date="1995" name="Nat. Struct. Biol.">
        <title>What do dysfunctional serpins tell us about molecular mobility and disease?</title>
        <authorList>
            <person name="Stein P.E."/>
            <person name="Carrell R.W."/>
        </authorList>
    </citation>
    <scope>REVIEW ON VARIANTS</scope>
</reference>
<reference key="33">
    <citation type="journal article" date="1997" name="Thromb. Haemost.">
        <title>Antithrombin mutation database: 2nd (1997) update.</title>
        <authorList>
            <consortium name="The plasma coagulation inhibitors subcommittee of the scientific and standardization committee of the international society on thrombosis and haemostasis"/>
            <person name="Lane D.A."/>
            <person name="Bayston T."/>
            <person name="Olds R.J."/>
            <person name="Fitches A.C."/>
            <person name="Cooper D.N."/>
            <person name="Millar D.S."/>
            <person name="Jochmans K."/>
            <person name="Perry D.J."/>
            <person name="Okajima K."/>
            <person name="Thein S.L."/>
            <person name="Emmerich J."/>
        </authorList>
    </citation>
    <scope>VARIANTS AT3D SER-17; PRO-23; ASN-39; CYS-56; LEU-73; CYS-79; HIS-79; SER-79; ASN-87 DEL; CYS-89; LEU-90; CYS-95; SER-95; PRO-98; THR-112; PHE-131; VAL-131; LYS-133; 138-PHE-LYS-139 DEL; PRO-148; PRO-150; PRO-158; TYR-160; GLN-161; CYS-198; HIS-198; ILE-218 DEL; ASP-219; LYS-219; ARG-257; LYS-269; ILE-283; ASN-316; LYS-334; ARG-412; THR-414; PRO-416; SER-416; VAL-419; ASP-424; CYS-425; HIS-425; PRO-425; LEU-426; CYS-434; LEU-434; SER-434; THR-436; LYS-437; GLY-438; MET-438; LEU-439; THR-439; THR-453; ARG-456; THR-457; ASP-459; LEU-461 AND PHE-462</scope>
    <scope>VARIANTS GLU-30; THR-52 AND CYS-190</scope>
</reference>
<reference key="34">
    <citation type="journal article" date="1984" name="Proc. Natl. Acad. Sci. U.S.A.">
        <title>Antithrombin III Toyama: replacement of arginine-47 by cysteine in hereditary abnormal antithrombin III that lacks heparin-binding ability.</title>
        <authorList>
            <person name="Koide T."/>
            <person name="Odani S."/>
            <person name="Takahashi K."/>
            <person name="Ono T."/>
            <person name="Sakuragawa N."/>
        </authorList>
    </citation>
    <scope>VARIANT AT3D CYS-79</scope>
</reference>
<reference key="35">
    <citation type="journal article" date="1986" name="J. Biol. Chem.">
        <title>Antithrombin III Basel. Identification of a Pro-Leu substitution in a hereditary abnormal antithrombin with impaired heparin cofactor activity.</title>
        <authorList>
            <person name="Chang J.Y."/>
            <person name="Tran T.H."/>
        </authorList>
    </citation>
    <scope>VARIANT AT3D LEU-73</scope>
    <scope>CHARACTERIZATION OF VARIANT AT3D LEU-73</scope>
</reference>
<reference key="36">
    <citation type="journal article" date="1987" name="J. Biol. Chem.">
        <title>Antithrombin-III Denver, a reactive site variant.</title>
        <authorList>
            <person name="Stephens A.W."/>
            <person name="Thalley B.S."/>
            <person name="Hirs C.H.W."/>
        </authorList>
    </citation>
    <scope>VARIANT AT3D LEU-426</scope>
</reference>
<reference key="37">
    <citation type="journal article" date="1988" name="Blood">
        <title>Antithrombin-III-Hamilton: a gene with a point mutation (guanine to adenine) in codon 382 causing impaired serine protease reactivity.</title>
        <authorList>
            <person name="Devrak-Kizuk R."/>
            <person name="Chui D.H.K."/>
            <person name="Prochownik E.V."/>
            <person name="Carter C.J."/>
            <person name="Ofosu F.A."/>
            <person name="Blajchman M.A."/>
        </authorList>
    </citation>
    <scope>VARIANT AT3D THR-414</scope>
</reference>
<reference key="38">
    <citation type="journal article" date="1988" name="J. Biol. Chem.">
        <title>Single amino acid substitutions in the reactive site of antithrombin leading to thrombosis. Congenital substitution of arginine 393 to cysteine in antithrombin Northwick Park and to histidine in antithrombin Glasgow.</title>
        <authorList>
            <person name="Erdjument H."/>
            <person name="Laned D.A."/>
            <person name="Panico M."/>
            <person name="di Marzo V."/>
            <person name="Morris H.R."/>
        </authorList>
    </citation>
    <scope>VARIANTS AT3D CYS-425 AND HIS-425</scope>
</reference>
<reference key="39">
    <citation type="journal article" date="1989" name="Thromb. Res.">
        <title>Antithrombin Chicago, amino acid substitution of arginine 393 to histidine.</title>
        <authorList>
            <person name="Erdjument H."/>
            <person name="Lane D.A."/>
            <person name="Panico M."/>
            <person name="di Marzo V."/>
            <person name="Morris H.R."/>
            <person name="Bauer K."/>
            <person name="Rosenberg R.D."/>
        </authorList>
    </citation>
    <scope>VARIANT AT3D HIS-425</scope>
</reference>
<reference key="40">
    <citation type="journal article" date="1990" name="FEBS Lett.">
        <title>Antithrombin Rouen-IV 24 Arg--&gt;Cys. The amino-terminal contribution to heparin binding.</title>
        <authorList>
            <person name="Borg J.Y."/>
            <person name="Brennan S.O."/>
            <person name="Carrell R.W."/>
            <person name="George P."/>
            <person name="Perry D.J."/>
            <person name="Shaw J."/>
        </authorList>
    </citation>
    <scope>VARIANT AT3D CYS-56</scope>
</reference>
<reference key="41">
    <citation type="journal article" date="1990" name="FEBS Lett.">
        <title>Antithrombin Dublin (-3 Val--&gt;Glu): an N-terminal variant which has an aberrant signal peptidase cleavage site.</title>
        <authorList>
            <person name="Daly M."/>
            <person name="Bruce D."/>
            <person name="Perry D.J."/>
            <person name="Price J."/>
            <person name="Harper P.L."/>
            <person name="O'Meara A."/>
            <person name="Carrell R.W."/>
        </authorList>
    </citation>
    <scope>VARIANT GLU-30</scope>
</reference>
<reference key="42">
    <citation type="journal article" date="1990" name="J. Biol. Chem.">
        <title>Important role of arginine 129 in heparin-binding site of antithrombin III. Identification of a novel mutation arginine 129 to glutamine.</title>
        <authorList>
            <person name="Gandrille S."/>
            <person name="Aiach M."/>
            <person name="Lane D.A."/>
            <person name="Vidaud D."/>
            <person name="Molho-Sabatier P."/>
            <person name="Caso R."/>
            <person name="de Moerloose P."/>
            <person name="Fiessinger J.-N."/>
            <person name="Clauser E."/>
        </authorList>
    </citation>
    <scope>VARIANT AT3D GLN-161</scope>
</reference>
<reference key="43">
    <citation type="journal article" date="1991" name="FEBS Lett.">
        <title>Site-directed mutagenesis of alanine-382 of human antithrombin III.</title>
        <authorList>
            <person name="Austin R.C."/>
            <person name="Rachubinski R.A."/>
            <person name="Blachjman M.A."/>
        </authorList>
    </citation>
    <scope>CHARACTERIZATION OF VARIANT AT3D THR-414</scope>
    <scope>MUTAGENESIS OF ALA-414</scope>
</reference>
<reference key="44">
    <citation type="journal article" date="1991" name="FEBS Lett.">
        <title>Antithrombin Cambridge II, 384 Ala to Ser. Further evidence of the role of the reactive centre loop in the inhibitory function of the serpins.</title>
        <authorList>
            <person name="Perry D.J."/>
            <person name="Daly M."/>
            <person name="Harper P.L."/>
            <person name="Tait R.C."/>
            <person name="Price J."/>
            <person name="Walker I.D."/>
            <person name="Carrell R.W."/>
        </authorList>
    </citation>
    <scope>VARIANT AT3D SER-416</scope>
</reference>
<reference key="45">
    <citation type="journal article" date="1992" name="FEBS Lett.">
        <title>Antithrombin Budapest 3. An antithrombin variant with reduced heparin affinity resulting from the substitution L99F.</title>
        <authorList>
            <person name="Olds R.J."/>
            <person name="Lane D.A."/>
            <person name="Boisclair M."/>
            <person name="Sas G."/>
            <person name="Bock S.C."/>
            <person name="Thein S.L."/>
        </authorList>
    </citation>
    <scope>VARIANT AT3D PHE-131</scope>
</reference>
<reference key="46">
    <citation type="journal article" date="1992" name="Blood">
        <title>Antithrombin-III Stockholm: a codon 392 (Gly--&gt;Asp) mutation with normal heparin binding and impaired serine protease reactivity.</title>
        <authorList>
            <person name="Blajchman M.A."/>
            <person name="Fernandez-Rachubinski F."/>
            <person name="Sheffield W.P."/>
            <person name="Austin R.C."/>
            <person name="Schulman S."/>
        </authorList>
    </citation>
    <scope>VARIANT AT3D ASP-424</scope>
</reference>
<reference key="47">
    <citation type="journal article" date="1992" name="Hum. Genet.">
        <title>A novel missense mutation in the antithrombin III gene (Ser349----Pro) causing recurrent venous thrombosis.</title>
        <authorList>
            <person name="Grundy C.B."/>
            <person name="Holding S."/>
            <person name="Millar D.S."/>
            <person name="Kakkar V.V."/>
            <person name="Cooper D.N."/>
        </authorList>
    </citation>
    <scope>VARIANT AT3D PRO-381</scope>
</reference>
<reference key="48">
    <citation type="journal article" date="1993" name="Blood">
        <title>Antithrombin III Nagasaki (Ser116-Pro): a heterozygous variant with defective heparin binding associated with thrombosis.</title>
        <authorList>
            <person name="Okajima K."/>
            <person name="Abe H."/>
            <person name="Maeda S."/>
            <person name="Motomura M."/>
            <person name="Tsujihata M."/>
            <person name="Nagataki S."/>
            <person name="Okabe H."/>
            <person name="Takatsuki K."/>
        </authorList>
    </citation>
    <scope>VARIANT AT3D PRO-148</scope>
</reference>
<reference key="49">
    <citation type="journal article" date="1993" name="Genomics">
        <title>A recurrent deletion in the antithrombin gene, AT106-108(-6 bp), identified by DNA heteroduplex detection.</title>
        <authorList>
            <person name="Olds R.J."/>
            <person name="Lane D.A."/>
            <person name="Beresford C.H."/>
            <person name="Abildgaard U."/>
            <person name="Hughes P.M."/>
            <person name="Thein S.L."/>
        </authorList>
    </citation>
    <scope>VARIANT AT3D 138-PHE-LYS-139 DEL</scope>
</reference>
<reference key="50">
    <citation type="journal article" date="1994" name="Br. J. Haematol.">
        <title>Prevalence of antithrombin deficiency in the healthy population.</title>
        <authorList>
            <person name="Tait R.C."/>
            <person name="Walker I.D."/>
            <person name="Perry D.J."/>
            <person name="Islam S.I."/>
            <person name="Daly M.E."/>
            <person name="McCall F."/>
            <person name="Conkie J.A."/>
            <person name="Carrell R.W."/>
        </authorList>
    </citation>
    <scope>VARIANT AT3D PRO-302</scope>
</reference>
<reference key="51">
    <citation type="journal article" date="1994" name="Arterioscler. Thromb.">
        <title>Three novel mutations of antithrombin inducing high-molecular-mass compounds.</title>
        <authorList>
            <person name="Emmerich J."/>
            <person name="Vidaud D."/>
            <person name="Alhenc-Gelas M."/>
            <person name="Chadeuf G."/>
            <person name="Gouault-Heilmann M."/>
            <person name="Aillaud M.-F."/>
            <person name="Aiach M."/>
        </authorList>
    </citation>
    <scope>VARIANTS AT3D HIS-79 AND TYR-160</scope>
</reference>
<reference key="52">
    <citation type="journal article" date="1994" name="Hum. Genet.">
        <title>Three novel missense mutations in the antithrombin III (AT3) gene causing recurrent venous thrombosis.</title>
        <authorList>
            <person name="Millar D.S."/>
            <person name="Wacey A.I."/>
            <person name="Ribando J."/>
            <person name="Melissari E."/>
            <person name="Laursen B."/>
            <person name="Woods P."/>
            <person name="Kakkar V.V."/>
            <person name="Cooper D.N."/>
        </authorList>
    </citation>
    <scope>VARIANTS AT3D THR-112; TYR-152 AND ILE-283</scope>
    <scope>VARIANT CYS-190</scope>
</reference>
<reference key="53">
    <citation type="journal article" date="1994" name="Blood">
        <title>Antithrombin-Gly 424 Arg: a novel point mutation responsible for type 1 antithrombin deficiency and neonatal thrombosis.</title>
        <authorList>
            <person name="Jochmans K."/>
            <person name="Lissens W."/>
            <person name="Vervoort R."/>
            <person name="Peeters S."/>
            <person name="de Waelwe M."/>
            <person name="Liebaers I."/>
        </authorList>
    </citation>
    <scope>VARIANT AT3D ARG-456</scope>
</reference>
<reference key="54">
    <citation type="journal article" date="1994" name="Blood">
        <title>Hereditary antithrombin deficiency: heterogeneity of the molecular basis and mortality in Dutch families.</title>
        <authorList>
            <person name="van Boven H.H."/>
            <person name="Olds R.J."/>
            <person name="Thein S.L."/>
            <person name="Reitsma P.H."/>
            <person name="Lane D.A."/>
            <person name="Briet E."/>
            <person name="Vandenbroucke J.P."/>
            <person name="Rosendaal F.R."/>
        </authorList>
    </citation>
    <scope>VARIANTS AT3D SER-95; THR-453 AND PHE-462</scope>
</reference>
<reference key="55">
    <citation type="journal article" date="1994" name="J. Clin. Invest.">
        <title>Thromboembolic disease due to thermolabile conformational changes of antithrombin Rouen-VI (187 Asn--&gt;Asp).</title>
        <authorList>
            <person name="Bruce D."/>
            <person name="Perry D.J."/>
            <person name="Borg J.-Y."/>
            <person name="Carrell R.W."/>
            <person name="Wardell M.R."/>
        </authorList>
    </citation>
    <scope>VARIANT AT3D ASP-219</scope>
</reference>
<reference key="56">
    <citation type="journal article" date="1994" name="Nouv. Rev. Fr. Hematol.">
        <title>Two novel antithrombin variants (L99V and Q118P) which alter the heparin binding domain.</title>
        <authorList>
            <person name="Chowdhury V."/>
            <person name="Olds R.J."/>
            <person name="Lane D.A."/>
            <person name="Mille B."/>
            <person name="Pabinger I."/>
            <person name="Thein S.L."/>
        </authorList>
    </citation>
    <scope>VARIANTS AT3D VAL-131 AND PRO-150</scope>
</reference>
<reference key="57">
    <citation type="journal article" date="1994" name="Thromb. Haemost.">
        <title>Molecular basis of antithrombin type I deficiency: the first large in-frame deletion and two novel mutations in exon 6.</title>
        <authorList>
            <person name="Emmerich J."/>
            <person name="Chadeuf G."/>
            <person name="Alhenc-Gelas M."/>
            <person name="Gouault-Heilman M."/>
            <person name="Toulon P."/>
            <person name="Fiessinger J.-N."/>
            <person name="Aiach M."/>
        </authorList>
    </citation>
    <scope>VARIANT AT3D 273-LYS--LYS-307 DEL</scope>
</reference>
<reference key="58">
    <citation type="journal article" date="1995" name="Am. J. Hematol.">
        <title>Antithrombin III Kumamoto II; a single mutation at Arg393-His increased the affinity of antithrombin III for heparin.</title>
        <authorList>
            <person name="Okajima K."/>
            <person name="Abe H."/>
            <person name="Wagatsuma M."/>
            <person name="Okabe H."/>
            <person name="Takatsuki K."/>
        </authorList>
    </citation>
    <scope>VARIANT AT3D HIS-425</scope>
</reference>
<reference key="59">
    <citation type="journal article" date="1996" name="Hum. Mutat.">
        <title>Molecular genetics of human antithrombin deficiency.</title>
        <authorList>
            <person name="Perry D.J."/>
            <person name="Carrell R.W."/>
        </authorList>
    </citation>
    <scope>VARIANTS AT3D 108-ILE-PHE-109 DEL; TYR-214 AND 459-ALA--PRO-461 DEL</scope>
</reference>
<reference key="60">
    <citation type="journal article" date="1997" name="Thromb. Haemost.">
        <title>Antithrombin Morioka (Cys 95-Arg): a novel missense mutation causing type I antithrombin deficiency.</title>
        <authorList>
            <person name="Ozawa T."/>
            <person name="Takikawa Y."/>
            <person name="Niiya K."/>
            <person name="Fujiwara T."/>
            <person name="Suzuki K."/>
            <person name="Sato S."/>
            <person name="Sakuragawa N."/>
        </authorList>
    </citation>
    <scope>VARIANT AT3D ARG-127</scope>
</reference>
<reference key="61">
    <citation type="journal article" date="1998" name="Blood">
        <title>Impaired cotranslational processing as a mechanism for type I antithrombin deficiency.</title>
        <authorList>
            <person name="Fitches A.C."/>
            <person name="Appleby R."/>
            <person name="Lane D.A."/>
            <person name="De Stefano V."/>
            <person name="Leone G."/>
            <person name="Olds R.J."/>
        </authorList>
    </citation>
    <scope>VARIANT AT3D PRO-23</scope>
</reference>
<reference key="62">
    <citation type="journal article" date="1998" name="Thromb. Haemost.">
        <title>The molecular basis of antithrombin deficiency in Belgian and Dutch families.</title>
        <authorList>
            <person name="Jochmans K."/>
            <person name="Lissens W."/>
            <person name="Seneca S."/>
            <person name="Capel P."/>
            <person name="Chatelain B."/>
            <person name="Meeus P."/>
            <person name="Osselaer J.C."/>
            <person name="Peerlinck K."/>
            <person name="Seghers J."/>
            <person name="Slacmeulder M."/>
            <person name="Stibbe J."/>
            <person name="van de Loo J."/>
            <person name="Vermylen J."/>
            <person name="Liebaers I."/>
            <person name="De Waele M."/>
        </authorList>
    </citation>
    <scope>VARIANTS AT3D ARG-32; LEU-73; CYS-79; HIS-198; ARG-257 AND ARG-412</scope>
</reference>
<reference key="63">
    <citation type="journal article" date="1999" name="Blood">
        <title>Familial overexpression of beta-antithrombin caused by an Asn135-to-Thr substitution.</title>
        <authorList>
            <person name="Bayston T.A."/>
            <person name="Tripodi A."/>
            <person name="Mannucci P.M."/>
            <person name="Thompson E."/>
            <person name="Ireland H."/>
            <person name="Fitches A.C."/>
            <person name="Hananeia L."/>
            <person name="Olds R.J."/>
            <person name="Lane D.A."/>
        </authorList>
    </citation>
    <scope>VARIANT THR-167</scope>
</reference>
<reference key="64">
    <citation type="journal article" date="2000" name="Br. J. Haematol.">
        <title>Molecular bases of antithrombin deficiency in French families: identification of seven novel mutations in the antithrombin gene.</title>
        <authorList>
            <person name="Picard V."/>
            <person name="Bura A."/>
            <person name="Emmerich J."/>
            <person name="Alhenc-Gelas M."/>
            <person name="Biron C."/>
            <person name="Houbouyan-Reveillard L.L."/>
            <person name="Molho P."/>
            <person name="Labatide-Alanore A."/>
            <person name="Sie P."/>
            <person name="Toulon P."/>
            <person name="Verdy E."/>
            <person name="Aiach M."/>
        </authorList>
    </citation>
    <scope>VARIANTS AT3D PHE-214; PRO-223; ILE-243; THR-251; VAL-283 AND PRO-397</scope>
</reference>
<reference key="65">
    <citation type="journal article" date="2001" name="Int. J. Hematol.">
        <title>Two novel gene mutations in type I antithrombin deficiency.</title>
        <authorList>
            <person name="Niiya K."/>
            <person name="Kiguchi T."/>
            <person name="Dansako H."/>
            <person name="Fujimura K."/>
            <person name="Fujimoto T."/>
            <person name="Iijima K."/>
            <person name="Tanimoto M."/>
            <person name="Harada M."/>
        </authorList>
    </citation>
    <scope>VARIANT AT3D 152-HIS--PHE-154 DEL</scope>
</reference>
<reference key="66">
    <citation type="journal article" date="2001" name="J. Pediatr.">
        <title>Intracerebral hemorrhage associated with a novel antithrombin gene mutation in a neonate.</title>
        <authorList>
            <person name="Baud O."/>
            <person name="Picard V."/>
            <person name="Durand P."/>
            <person name="Duchemin J."/>
            <person name="Proulle V."/>
            <person name="Alhenc-Gelas M."/>
            <person name="Devictor D."/>
            <person name="Dreyfus M."/>
        </authorList>
    </citation>
    <scope>VARIANT AT3D PRO-223</scope>
</reference>
<reference key="67">
    <citation type="journal article" date="2002" name="Thromb. Haemost.">
        <title>Antithrombin 'DREUX' (Lys 114Glu): a variant with complete loss of heparin affinity.</title>
        <authorList>
            <person name="Mushunje A."/>
            <person name="Zhou A."/>
            <person name="Huntington J.A."/>
            <person name="Conard J."/>
            <person name="Carrell R.W."/>
        </authorList>
    </citation>
    <scope>VARIANT AT3D GLU-146</scope>
</reference>
<reference key="68">
    <citation type="journal article" date="2003" name="Blood">
        <title>Antithrombin Phe229Leu: a new homozygous variant leading to spontaneous antithrombin polymerization in vivo associated with severe childhood thrombosis.</title>
        <authorList>
            <person name="Picard V."/>
            <person name="Dautzenberg M.-D."/>
            <person name="Villoutreix B.O."/>
            <person name="Orliaguet G."/>
            <person name="Alhenc-Gelas M."/>
            <person name="Aiach M."/>
        </authorList>
    </citation>
    <scope>VARIANT AT3D LEU-261</scope>
</reference>
<reference key="69">
    <citation type="journal article" date="2003" name="Int. J. Hematol.">
        <title>Five novel and four recurrent point mutations in the antithrombin gene causing venous thrombosis.</title>
        <authorList>
            <person name="Nagaizumi K."/>
            <person name="Inaba H."/>
            <person name="Amano K."/>
            <person name="Suzuki M."/>
            <person name="Arai M."/>
            <person name="Fukutake K."/>
        </authorList>
    </citation>
    <scope>VARIANTS AT3D LYS-121; HIS-178; CYS-425; HIS-425 AND PRO-441</scope>
</reference>
<reference key="70">
    <citation type="journal article" date="2004" name="Am. J. Hematol.">
        <title>Molecular basis of inherited antithrombin deficiency in Portuguese families: identification of genetic alterations and screening for additional thrombotic risk factors.</title>
        <authorList>
            <person name="David D."/>
            <person name="Ribeiro S."/>
            <person name="Ferrao L."/>
            <person name="Gago T."/>
            <person name="Crespo F."/>
        </authorList>
    </citation>
    <scope>VARIANTS AT3D LEU-179; CYS-425 AND LEU-426</scope>
</reference>
<reference key="71">
    <citation type="journal article" date="2004" name="J. Thromb. Haemost.">
        <title>Mutations in the shutter region of antithrombin result in formation of disulfide-linked dimers and severe venous thrombosis.</title>
        <authorList>
            <person name="Corral J."/>
            <person name="Huntington J.A."/>
            <person name="Gonzalez-Conejero R."/>
            <person name="Mushunje A."/>
            <person name="Navarro M."/>
            <person name="Marco P."/>
            <person name="Vicente V."/>
            <person name="Carrell R.W."/>
        </authorList>
    </citation>
    <scope>VARIANTS AT3D SER-112 AND ARG-456</scope>
    <scope>CHARACTERIZATION OF VARIANTS AT3D SER-112 AND ARG-456</scope>
    <scope>FUNCTION</scope>
</reference>
<reference key="72">
    <citation type="journal article" date="2006" name="Arch. Ophthalmol.">
        <title>Retinal vein occlusion associated with antithrombin deficiency secondary to a novel G9840C missense mutation.</title>
        <authorList>
            <person name="Kuhli C."/>
            <person name="Jochmans K."/>
            <person name="Scharrer I."/>
            <person name="Luechtenberg M."/>
            <person name="Hattenbach L.-O."/>
        </authorList>
    </citation>
    <scope>VARIANT AT3D HIS-398</scope>
</reference>
<reference key="73">
    <citation type="journal article" date="2012" name="J. Thromb. Haemost.">
        <title>Type II antithrombin deficiency caused by a large in-frame insertion: structural, functional and pathological relevance.</title>
        <authorList>
            <person name="Martinez-Martinez I."/>
            <person name="Johnson D.J."/>
            <person name="Yamasaki M."/>
            <person name="Navarro-Fernandez J."/>
            <person name="Ordonez A."/>
            <person name="Vicente V."/>
            <person name="Huntington J.A."/>
            <person name="Corral J."/>
        </authorList>
    </citation>
    <scope>VARIANT AT3D 241-GLU-LEU-242 DELINS VAL-LEU-VAL-LEU-VAL-ASN-THR-ARG-THR-SER</scope>
    <scope>CHARACTERIZATION OF VARIANT AT3D 241-GLU-LEU-242 DELINS VAL-LEU-VAL-LEU-VAL-ASN-THR-ARG-THR-SER</scope>
</reference>
<reference key="74">
    <citation type="journal article" date="2013" name="J. Thromb. Haemost.">
        <title>Type II antithrombin deficiency caused by a founder mutation Pro73Leu in the Finnish population: clinical picture.</title>
        <authorList>
            <person name="Puurunen M."/>
            <person name="Salo P."/>
            <person name="Engelbarth S."/>
            <person name="Javela K."/>
            <person name="Perola M."/>
        </authorList>
    </citation>
    <scope>VARIANTS AT3D PHE-53; LEU-73; ASP-125; PRO-170; ASN-218; GLY-248; PRO-293; ARG-401; CYS-425; GLY-438 AND ALA-439</scope>
    <scope>VARIANT GLU-30</scope>
</reference>
<reference key="75">
    <citation type="journal article" date="2017" name="Res. Pract. Thromb. Haemost.">
        <title>Defects of splicing in antithrombin deficiency.</title>
        <authorList>
            <person name="de la Morena-Barrio M.E."/>
            <person name="Lopez-Galvez R."/>
            <person name="Martinez-Martinez I."/>
            <person name="Asenjo S."/>
            <person name="Sevivas T.S."/>
            <person name="Lopez M.F."/>
            <person name="Wypasek E."/>
            <person name="Entrena L."/>
            <person name="Vicente V."/>
            <person name="Corral J."/>
        </authorList>
    </citation>
    <scope>VARIANT AT3D VAL-PHE-LEU-PRO-384 INS</scope>
</reference>
<reference key="76">
    <citation type="journal article" date="2021" name="Thromb. Haemost.">
        <title>Antithrombin p.Thr147Ala: The first founder mutation in people of African origin responsible for inherited antithrombin deficiency.</title>
        <authorList>
            <person name="Orlando C."/>
            <person name="de la Morena-Barrio B."/>
            <person name="Pareyn I."/>
            <person name="Vanhoorelbeke K."/>
            <person name="Martinez-Martinez I."/>
            <person name="Vicente V."/>
            <person name="Corral J."/>
            <person name="Jochmans K."/>
            <person name="de la Morena-Barrio M.E."/>
        </authorList>
    </citation>
    <scope>VARIANT AT3D ALA-147</scope>
    <scope>CHARACTERIZATION OF VARIANT AT3D ALA-147</scope>
</reference>
<organism>
    <name type="scientific">Homo sapiens</name>
    <name type="common">Human</name>
    <dbReference type="NCBI Taxonomy" id="9606"/>
    <lineage>
        <taxon>Eukaryota</taxon>
        <taxon>Metazoa</taxon>
        <taxon>Chordata</taxon>
        <taxon>Craniata</taxon>
        <taxon>Vertebrata</taxon>
        <taxon>Euteleostomi</taxon>
        <taxon>Mammalia</taxon>
        <taxon>Eutheria</taxon>
        <taxon>Euarchontoglires</taxon>
        <taxon>Primates</taxon>
        <taxon>Haplorrhini</taxon>
        <taxon>Catarrhini</taxon>
        <taxon>Hominidae</taxon>
        <taxon>Homo</taxon>
    </lineage>
</organism>
<evidence type="ECO:0000269" key="1">
    <source>
    </source>
</evidence>
<evidence type="ECO:0000269" key="2">
    <source>
    </source>
</evidence>
<evidence type="ECO:0000269" key="3">
    <source>
    </source>
</evidence>
<evidence type="ECO:0000269" key="4">
    <source>
    </source>
</evidence>
<evidence type="ECO:0000269" key="5">
    <source>
    </source>
</evidence>
<evidence type="ECO:0000269" key="6">
    <source>
    </source>
</evidence>
<evidence type="ECO:0000269" key="7">
    <source>
    </source>
</evidence>
<evidence type="ECO:0000269" key="8">
    <source>
    </source>
</evidence>
<evidence type="ECO:0000269" key="9">
    <source>
    </source>
</evidence>
<evidence type="ECO:0000269" key="10">
    <source>
    </source>
</evidence>
<evidence type="ECO:0000269" key="11">
    <source>
    </source>
</evidence>
<evidence type="ECO:0000269" key="12">
    <source>
    </source>
</evidence>
<evidence type="ECO:0000269" key="13">
    <source>
    </source>
</evidence>
<evidence type="ECO:0000269" key="14">
    <source>
    </source>
</evidence>
<evidence type="ECO:0000269" key="15">
    <source>
    </source>
</evidence>
<evidence type="ECO:0000269" key="16">
    <source>
    </source>
</evidence>
<evidence type="ECO:0000269" key="17">
    <source>
    </source>
</evidence>
<evidence type="ECO:0000269" key="18">
    <source>
    </source>
</evidence>
<evidence type="ECO:0000269" key="19">
    <source>
    </source>
</evidence>
<evidence type="ECO:0000269" key="20">
    <source>
    </source>
</evidence>
<evidence type="ECO:0000269" key="21">
    <source>
    </source>
</evidence>
<evidence type="ECO:0000269" key="22">
    <source>
    </source>
</evidence>
<evidence type="ECO:0000269" key="23">
    <source>
    </source>
</evidence>
<evidence type="ECO:0000269" key="24">
    <source>
    </source>
</evidence>
<evidence type="ECO:0000269" key="25">
    <source>
    </source>
</evidence>
<evidence type="ECO:0000269" key="26">
    <source>
    </source>
</evidence>
<evidence type="ECO:0000269" key="27">
    <source>
    </source>
</evidence>
<evidence type="ECO:0000269" key="28">
    <source>
    </source>
</evidence>
<evidence type="ECO:0000269" key="29">
    <source>
    </source>
</evidence>
<evidence type="ECO:0000269" key="30">
    <source>
    </source>
</evidence>
<evidence type="ECO:0000269" key="31">
    <source>
    </source>
</evidence>
<evidence type="ECO:0000269" key="32">
    <source>
    </source>
</evidence>
<evidence type="ECO:0000269" key="33">
    <source>
    </source>
</evidence>
<evidence type="ECO:0000269" key="34">
    <source>
    </source>
</evidence>
<evidence type="ECO:0000269" key="35">
    <source>
    </source>
</evidence>
<evidence type="ECO:0000269" key="36">
    <source>
    </source>
</evidence>
<evidence type="ECO:0000269" key="37">
    <source>
    </source>
</evidence>
<evidence type="ECO:0000269" key="38">
    <source>
    </source>
</evidence>
<evidence type="ECO:0000269" key="39">
    <source>
    </source>
</evidence>
<evidence type="ECO:0000269" key="40">
    <source>
    </source>
</evidence>
<evidence type="ECO:0000269" key="41">
    <source>
    </source>
</evidence>
<evidence type="ECO:0000269" key="42">
    <source>
    </source>
</evidence>
<evidence type="ECO:0000269" key="43">
    <source>
    </source>
</evidence>
<evidence type="ECO:0000269" key="44">
    <source>
    </source>
</evidence>
<evidence type="ECO:0000269" key="45">
    <source>
    </source>
</evidence>
<evidence type="ECO:0000269" key="46">
    <source>
    </source>
</evidence>
<evidence type="ECO:0000269" key="47">
    <source>
    </source>
</evidence>
<evidence type="ECO:0000269" key="48">
    <source>
    </source>
</evidence>
<evidence type="ECO:0000269" key="49">
    <source>
    </source>
</evidence>
<evidence type="ECO:0000269" key="50">
    <source>
    </source>
</evidence>
<evidence type="ECO:0000269" key="51">
    <source>
    </source>
</evidence>
<evidence type="ECO:0000269" key="52">
    <source>
    </source>
</evidence>
<evidence type="ECO:0000269" key="53">
    <source>
    </source>
</evidence>
<evidence type="ECO:0000269" key="54">
    <source>
    </source>
</evidence>
<evidence type="ECO:0000269" key="55">
    <source ref="10"/>
</evidence>
<evidence type="ECO:0000269" key="56">
    <source ref="3"/>
</evidence>
<evidence type="ECO:0000269" key="57">
    <source ref="56"/>
</evidence>
<evidence type="ECO:0000269" key="58">
    <source ref="7"/>
</evidence>
<evidence type="ECO:0000305" key="59"/>
<evidence type="ECO:0007744" key="60">
    <source>
    </source>
</evidence>
<evidence type="ECO:0007829" key="61">
    <source>
        <dbReference type="PDB" id="1DZG"/>
    </source>
</evidence>
<evidence type="ECO:0007829" key="62">
    <source>
        <dbReference type="PDB" id="1E04"/>
    </source>
</evidence>
<evidence type="ECO:0007829" key="63">
    <source>
        <dbReference type="PDB" id="1OYH"/>
    </source>
</evidence>
<evidence type="ECO:0007829" key="64">
    <source>
        <dbReference type="PDB" id="2B4X"/>
    </source>
</evidence>
<evidence type="ECO:0007829" key="65">
    <source>
        <dbReference type="PDB" id="2B5T"/>
    </source>
</evidence>
<evidence type="ECO:0007829" key="66">
    <source>
        <dbReference type="PDB" id="3KCG"/>
    </source>
</evidence>